<organism>
    <name type="scientific">Homo sapiens</name>
    <name type="common">Human</name>
    <dbReference type="NCBI Taxonomy" id="9606"/>
    <lineage>
        <taxon>Eukaryota</taxon>
        <taxon>Metazoa</taxon>
        <taxon>Chordata</taxon>
        <taxon>Craniata</taxon>
        <taxon>Vertebrata</taxon>
        <taxon>Euteleostomi</taxon>
        <taxon>Mammalia</taxon>
        <taxon>Eutheria</taxon>
        <taxon>Euarchontoglires</taxon>
        <taxon>Primates</taxon>
        <taxon>Haplorrhini</taxon>
        <taxon>Catarrhini</taxon>
        <taxon>Hominidae</taxon>
        <taxon>Homo</taxon>
    </lineage>
</organism>
<evidence type="ECO:0000255" key="1"/>
<evidence type="ECO:0000269" key="2">
    <source>
    </source>
</evidence>
<evidence type="ECO:0000269" key="3">
    <source>
    </source>
</evidence>
<evidence type="ECO:0000269" key="4">
    <source>
    </source>
</evidence>
<evidence type="ECO:0000269" key="5">
    <source>
    </source>
</evidence>
<evidence type="ECO:0000269" key="6">
    <source>
    </source>
</evidence>
<evidence type="ECO:0000269" key="7">
    <source>
    </source>
</evidence>
<evidence type="ECO:0000305" key="8"/>
<evidence type="ECO:0007744" key="9">
    <source>
    </source>
</evidence>
<evidence type="ECO:0007829" key="10">
    <source>
        <dbReference type="PDB" id="1JK8"/>
    </source>
</evidence>
<evidence type="ECO:0007829" key="11">
    <source>
        <dbReference type="PDB" id="1UVQ"/>
    </source>
</evidence>
<evidence type="ECO:0007829" key="12">
    <source>
        <dbReference type="PDB" id="8VSP"/>
    </source>
</evidence>
<protein>
    <recommendedName>
        <fullName>HLA class II histocompatibility antigen, DQ beta 1 chain</fullName>
    </recommendedName>
    <alternativeName>
        <fullName>MHC class II antigen DQB1</fullName>
    </alternativeName>
</protein>
<gene>
    <name type="primary">HLA-DQB1</name>
    <name type="synonym">HLA-DQB</name>
</gene>
<proteinExistence type="evidence at protein level"/>
<keyword id="KW-0002">3D-structure</keyword>
<keyword id="KW-1064">Adaptive immunity</keyword>
<keyword id="KW-1003">Cell membrane</keyword>
<keyword id="KW-0903">Direct protein sequencing</keyword>
<keyword id="KW-1015">Disulfide bond</keyword>
<keyword id="KW-0256">Endoplasmic reticulum</keyword>
<keyword id="KW-0967">Endosome</keyword>
<keyword id="KW-0325">Glycoprotein</keyword>
<keyword id="KW-0333">Golgi apparatus</keyword>
<keyword id="KW-0391">Immunity</keyword>
<keyword id="KW-0458">Lysosome</keyword>
<keyword id="KW-0472">Membrane</keyword>
<keyword id="KW-0491">MHC II</keyword>
<keyword id="KW-1267">Proteomics identification</keyword>
<keyword id="KW-1185">Reference proteome</keyword>
<keyword id="KW-0732">Signal</keyword>
<keyword id="KW-0812">Transmembrane</keyword>
<keyword id="KW-1133">Transmembrane helix</keyword>
<reference key="1">
    <citation type="journal article" date="1983" name="Hum. Immunol.">
        <title>Molecular analysis of human class II transplantation antigens and their genes.</title>
        <authorList>
            <person name="Larhammar D."/>
            <person name="Andersson G."/>
            <person name="Andersson M."/>
            <person name="Bill P."/>
            <person name="Boehme J."/>
            <person name="Claesson L."/>
            <person name="Denaro M."/>
            <person name="Emmoth E."/>
            <person name="Gustafsson K."/>
            <person name="Hammarling U."/>
            <person name="Heldin E."/>
            <person name="Hyldig-Nielsen J.-J."/>
            <person name="Lind P."/>
            <person name="Schenning L."/>
            <person name="Servenius B."/>
            <person name="Widmark E."/>
            <person name="Rask L."/>
            <person name="Peterson P.A."/>
        </authorList>
    </citation>
    <scope>NUCLEOTIDE SEQUENCE [MRNA] (ALLELE DQB1*02:01)</scope>
    <scope>NUCLEOTIDE SEQUENCE [MRNA] OF 33-261 (CLONE PII-BETA-2) (ALLELE DQB1*05:01)</scope>
</reference>
<reference key="2">
    <citation type="journal article" date="1982" name="Proc. Natl. Acad. Sci. U.S.A.">
        <title>Complete amino acid sequence of an HLA-DR antigen-like beta chain as predicted from the nucleotide sequence: similarities with immunoglobulins and HLA-A, -B, and -C antigens.</title>
        <authorList>
            <person name="Larhammar D."/>
            <person name="Schenning L."/>
            <person name="Gustafsson K."/>
            <person name="Wiman K."/>
            <person name="Claesson L."/>
            <person name="Rask L."/>
            <person name="Peterson P.A."/>
        </authorList>
    </citation>
    <scope>NUCLEOTIDE SEQUENCE [MRNA] (ALLELE DQB1*02:01)</scope>
</reference>
<reference key="3">
    <citation type="journal article" date="1983" name="Proc. Natl. Acad. Sci. U.S.A.">
        <title>Exon-intron organization and complete nucleotide sequence of a human major histocompatibility antigen DC beta gene.</title>
        <authorList>
            <person name="Larhammar D."/>
            <person name="Hyldig-Nielsen J.-J."/>
            <person name="Servenius B."/>
            <person name="Andersson G."/>
            <person name="Rask L."/>
            <person name="Peterson P.A."/>
        </authorList>
    </citation>
    <scope>NUCLEOTIDE SEQUENCE [GENOMIC DNA] (ALLELE DQB1*03:02)</scope>
</reference>
<reference key="4">
    <citation type="journal article" date="1984" name="Proc. Natl. Acad. Sci. U.S.A.">
        <title>Cloning and sequence analysis of the human major histocompatibility complex gene DC-3 beta.</title>
        <authorList>
            <person name="Boss J.M."/>
            <person name="Strominger J.L."/>
        </authorList>
    </citation>
    <scope>NUCLEOTIDE SEQUENCE [GENOMIC DNA] (ALLELE DQB1*02:01)</scope>
</reference>
<reference key="5">
    <citation type="journal article" date="1985" name="EMBO J.">
        <title>DO beta: a new beta chain gene in HLA-D with a distinct regulation of expression.</title>
        <authorList>
            <person name="Tonnelle C."/>
            <person name="Demars R."/>
            <person name="Long E.O."/>
        </authorList>
    </citation>
    <scope>NUCLEOTIDE SEQUENCE [MRNA] (ALLELE DQB1*05:01)</scope>
</reference>
<reference key="6">
    <citation type="journal article" date="1987" name="Immunogenetics">
        <title>Allelic forms of the alpha- and beta-chain genes encoding DQw1-positive heterodimers.</title>
        <authorList>
            <person name="Turco E."/>
            <person name="Care A."/>
            <person name="Compagnone-Post P."/>
            <person name="Robinson C."/>
            <person name="Cascino I."/>
            <person name="Trucco M."/>
        </authorList>
    </citation>
    <scope>NUCLEOTIDE SEQUENCE [MRNA] (ALLELE DQB1*05:01)</scope>
</reference>
<reference key="7">
    <citation type="journal article" date="1987" name="J. Biol. Chem.">
        <title>Class II genes of the human major histocompatibility complex. Comparisons of the DQ and DX alpha and beta genes.</title>
        <authorList>
            <person name="Jonsson A.-K."/>
            <person name="Hyldig-Nielsen J.-J."/>
            <person name="Servenius B."/>
            <person name="Larhammar D."/>
            <person name="Andersson G."/>
            <person name="Joergensen F."/>
            <person name="Peterson P.A."/>
            <person name="Rask L."/>
        </authorList>
    </citation>
    <scope>NUCLEOTIDE SEQUENCE [GENOMIC DNA] (ALLELE DQB1*03:02)</scope>
</reference>
<reference key="8">
    <citation type="journal article" date="1987" name="J. Immunol.">
        <title>Complete sequence of the HLA DQ alpha and DQ beta cDNA from a DR5/DQw3 cell line.</title>
        <authorList>
            <person name="Schiffenbauer J."/>
            <person name="Didier D.K."/>
            <person name="Klearman M."/>
            <person name="Rice K."/>
            <person name="Shuman S."/>
            <person name="Tieber V.L."/>
            <person name="Kittlesen D.J."/>
            <person name="Schwartz B.D."/>
        </authorList>
    </citation>
    <scope>NUCLEOTIDE SEQUENCE [MRNA]</scope>
    <scope>VARIANTS VAL-15; SER-28; GLY-45; LEU-58; GLY-77; GLY-102 AND ARG-199</scope>
</reference>
<reference key="9">
    <citation type="journal article" date="1988" name="Immunogenetics">
        <title>MHC class II sequences of an HLA-DR2 narcoleptic.</title>
        <authorList>
            <person name="Lock C.B."/>
            <person name="So A.K."/>
            <person name="Welsh K.I."/>
            <person name="Parkes J.D."/>
            <person name="Trowsdale J."/>
        </authorList>
    </citation>
    <scope>NUCLEOTIDE SEQUENCE [MRNA] (ALLELE DQB1*06:02)</scope>
</reference>
<reference key="10">
    <citation type="journal article" date="1991" name="Immunogenetics">
        <title>Full length beta chain cDNAs of DQw9 and DQw8 molecules encode proteins that differ only at amino acid 57.</title>
        <authorList>
            <person name="Giorda R."/>
            <person name="Turco E."/>
            <person name="Trucco M."/>
        </authorList>
    </citation>
    <scope>NUCLEOTIDE SEQUENCE [MRNA] (ALLELE DQB1*03:03)</scope>
</reference>
<reference key="11">
    <citation type="journal article" date="1996" name="Tissue Antigens">
        <title>Complete coding region of the new HLA-DQB1*0612 allele, obtained by RT-PCR.</title>
        <authorList>
            <person name="Vilches C."/>
            <person name="Garcia-Pacheco J.M."/>
            <person name="de Pablo R."/>
            <person name="Puente S."/>
            <person name="Kreisler M."/>
        </authorList>
    </citation>
    <scope>NUCLEOTIDE SEQUENCE [MRNA] (ALLELE DQB1*06:12)</scope>
</reference>
<reference key="12">
    <citation type="journal article" date="1997" name="Immunogenetics">
        <title>HLA class II haplotype and sequence analysis support a role for DQ in narcolepsy.</title>
        <authorList>
            <person name="Ellis M.C."/>
            <person name="Hetisimer A.H."/>
            <person name="Ruddy D.A."/>
            <person name="Hansen S.L."/>
            <person name="Kronmal G.S."/>
            <person name="McClelland E."/>
            <person name="Quintana L."/>
            <person name="Drayna D.T."/>
            <person name="Aldrich M.S."/>
            <person name="Mignot E."/>
        </authorList>
    </citation>
    <scope>NUCLEOTIDE SEQUENCE [GENOMIC DNA] (ALLELE DQB1*02:01)</scope>
</reference>
<reference key="13">
    <citation type="journal article" date="2005" name="Genome Res.">
        <title>Ancient haplotypes of the HLA Class II region.</title>
        <authorList>
            <person name="Raymond C.K."/>
            <person name="Kas A."/>
            <person name="Paddock M."/>
            <person name="Qiu R."/>
            <person name="Zhou Y."/>
            <person name="Subramanian S."/>
            <person name="Chang J."/>
            <person name="Palmieri A."/>
            <person name="Haugen E."/>
            <person name="Kaul R."/>
            <person name="Olson M.V."/>
        </authorList>
    </citation>
    <scope>NUCLEOTIDE SEQUENCE [GENOMIC DNA] (ALLELES DQB1*03:01 AND DQB1*03:03)</scope>
</reference>
<reference key="14">
    <citation type="submission" date="2004-06" db="EMBL/GenBank/DDBJ databases">
        <authorList>
            <person name="Kim E."/>
            <person name="Lee E."/>
            <person name="Kwack K."/>
        </authorList>
    </citation>
    <scope>NUCLEOTIDE SEQUENCE [MRNA] (ALLELES DQB1*03:01; DQB1*04:01 AND DQB1*05:02)</scope>
</reference>
<reference key="15">
    <citation type="journal article" date="2003" name="Nature">
        <title>The DNA sequence and analysis of human chromosome 6.</title>
        <authorList>
            <person name="Mungall A.J."/>
            <person name="Palmer S.A."/>
            <person name="Sims S.K."/>
            <person name="Edwards C.A."/>
            <person name="Ashurst J.L."/>
            <person name="Wilming L."/>
            <person name="Jones M.C."/>
            <person name="Horton R."/>
            <person name="Hunt S.E."/>
            <person name="Scott C.E."/>
            <person name="Gilbert J.G.R."/>
            <person name="Clamp M.E."/>
            <person name="Bethel G."/>
            <person name="Milne S."/>
            <person name="Ainscough R."/>
            <person name="Almeida J.P."/>
            <person name="Ambrose K.D."/>
            <person name="Andrews T.D."/>
            <person name="Ashwell R.I.S."/>
            <person name="Babbage A.K."/>
            <person name="Bagguley C.L."/>
            <person name="Bailey J."/>
            <person name="Banerjee R."/>
            <person name="Barker D.J."/>
            <person name="Barlow K.F."/>
            <person name="Bates K."/>
            <person name="Beare D.M."/>
            <person name="Beasley H."/>
            <person name="Beasley O."/>
            <person name="Bird C.P."/>
            <person name="Blakey S.E."/>
            <person name="Bray-Allen S."/>
            <person name="Brook J."/>
            <person name="Brown A.J."/>
            <person name="Brown J.Y."/>
            <person name="Burford D.C."/>
            <person name="Burrill W."/>
            <person name="Burton J."/>
            <person name="Carder C."/>
            <person name="Carter N.P."/>
            <person name="Chapman J.C."/>
            <person name="Clark S.Y."/>
            <person name="Clark G."/>
            <person name="Clee C.M."/>
            <person name="Clegg S."/>
            <person name="Cobley V."/>
            <person name="Collier R.E."/>
            <person name="Collins J.E."/>
            <person name="Colman L.K."/>
            <person name="Corby N.R."/>
            <person name="Coville G.J."/>
            <person name="Culley K.M."/>
            <person name="Dhami P."/>
            <person name="Davies J."/>
            <person name="Dunn M."/>
            <person name="Earthrowl M.E."/>
            <person name="Ellington A.E."/>
            <person name="Evans K.A."/>
            <person name="Faulkner L."/>
            <person name="Francis M.D."/>
            <person name="Frankish A."/>
            <person name="Frankland J."/>
            <person name="French L."/>
            <person name="Garner P."/>
            <person name="Garnett J."/>
            <person name="Ghori M.J."/>
            <person name="Gilby L.M."/>
            <person name="Gillson C.J."/>
            <person name="Glithero R.J."/>
            <person name="Grafham D.V."/>
            <person name="Grant M."/>
            <person name="Gribble S."/>
            <person name="Griffiths C."/>
            <person name="Griffiths M.N.D."/>
            <person name="Hall R."/>
            <person name="Halls K.S."/>
            <person name="Hammond S."/>
            <person name="Harley J.L."/>
            <person name="Hart E.A."/>
            <person name="Heath P.D."/>
            <person name="Heathcott R."/>
            <person name="Holmes S.J."/>
            <person name="Howden P.J."/>
            <person name="Howe K.L."/>
            <person name="Howell G.R."/>
            <person name="Huckle E."/>
            <person name="Humphray S.J."/>
            <person name="Humphries M.D."/>
            <person name="Hunt A.R."/>
            <person name="Johnson C.M."/>
            <person name="Joy A.A."/>
            <person name="Kay M."/>
            <person name="Keenan S.J."/>
            <person name="Kimberley A.M."/>
            <person name="King A."/>
            <person name="Laird G.K."/>
            <person name="Langford C."/>
            <person name="Lawlor S."/>
            <person name="Leongamornlert D.A."/>
            <person name="Leversha M."/>
            <person name="Lloyd C.R."/>
            <person name="Lloyd D.M."/>
            <person name="Loveland J.E."/>
            <person name="Lovell J."/>
            <person name="Martin S."/>
            <person name="Mashreghi-Mohammadi M."/>
            <person name="Maslen G.L."/>
            <person name="Matthews L."/>
            <person name="McCann O.T."/>
            <person name="McLaren S.J."/>
            <person name="McLay K."/>
            <person name="McMurray A."/>
            <person name="Moore M.J.F."/>
            <person name="Mullikin J.C."/>
            <person name="Niblett D."/>
            <person name="Nickerson T."/>
            <person name="Novik K.L."/>
            <person name="Oliver K."/>
            <person name="Overton-Larty E.K."/>
            <person name="Parker A."/>
            <person name="Patel R."/>
            <person name="Pearce A.V."/>
            <person name="Peck A.I."/>
            <person name="Phillimore B.J.C.T."/>
            <person name="Phillips S."/>
            <person name="Plumb R.W."/>
            <person name="Porter K.M."/>
            <person name="Ramsey Y."/>
            <person name="Ranby S.A."/>
            <person name="Rice C.M."/>
            <person name="Ross M.T."/>
            <person name="Searle S.M."/>
            <person name="Sehra H.K."/>
            <person name="Sheridan E."/>
            <person name="Skuce C.D."/>
            <person name="Smith S."/>
            <person name="Smith M."/>
            <person name="Spraggon L."/>
            <person name="Squares S.L."/>
            <person name="Steward C.A."/>
            <person name="Sycamore N."/>
            <person name="Tamlyn-Hall G."/>
            <person name="Tester J."/>
            <person name="Theaker A.J."/>
            <person name="Thomas D.W."/>
            <person name="Thorpe A."/>
            <person name="Tracey A."/>
            <person name="Tromans A."/>
            <person name="Tubby B."/>
            <person name="Wall M."/>
            <person name="Wallis J.M."/>
            <person name="West A.P."/>
            <person name="White S.S."/>
            <person name="Whitehead S.L."/>
            <person name="Whittaker H."/>
            <person name="Wild A."/>
            <person name="Willey D.J."/>
            <person name="Wilmer T.E."/>
            <person name="Wood J.M."/>
            <person name="Wray P.W."/>
            <person name="Wyatt J.C."/>
            <person name="Young L."/>
            <person name="Younger R.M."/>
            <person name="Bentley D.R."/>
            <person name="Coulson A."/>
            <person name="Durbin R.M."/>
            <person name="Hubbard T."/>
            <person name="Sulston J.E."/>
            <person name="Dunham I."/>
            <person name="Rogers J."/>
            <person name="Beck S."/>
        </authorList>
    </citation>
    <scope>NUCLEOTIDE SEQUENCE [LARGE SCALE GENOMIC DNA] (ALLELES DQB1*02:02; DQB1*03:01 AND DQB1*03:03)</scope>
</reference>
<reference key="16">
    <citation type="journal article" date="2004" name="Genome Res.">
        <title>The status, quality, and expansion of the NIH full-length cDNA project: the Mammalian Gene Collection (MGC).</title>
        <authorList>
            <consortium name="The MGC Project Team"/>
        </authorList>
    </citation>
    <scope>NUCLEOTIDE SEQUENCE [LARGE SCALE MRNA] (ALLELE DQB1*03:02)</scope>
    <source>
        <tissue>B-cell</tissue>
    </source>
</reference>
<reference key="17">
    <citation type="journal article" date="1989" name="Immunogenetics">
        <title>Sequence analysis of HLA class II domains: characterization of the DQw3 family of DQB genes.</title>
        <authorList>
            <person name="Hiraiwa A."/>
            <person name="Seyfried C.E."/>
            <person name="Nepom G.T."/>
            <person name="Milner E.C."/>
        </authorList>
    </citation>
    <scope>NUCLEOTIDE SEQUENCE [MRNA] OF 1-126 (ALLELE DQB1*06:02)</scope>
</reference>
<reference key="18">
    <citation type="submission" date="1996-12" db="EMBL/GenBank/DDBJ databases">
        <title>Nucleotide Deletions in a DQB1*0301 variant.</title>
        <authorList>
            <person name="White J.M."/>
            <person name="Baxter-Lowe L.A."/>
        </authorList>
    </citation>
    <scope>NUCLEOTIDE SEQUENCE [MRNA] OF 2-261 (ALLELE DQB1*03:01)</scope>
    <scope>NUCLEOTIDE SEQUENCE [MRNA] OF 33-261 (ALLELE DQB1*03:09)</scope>
</reference>
<reference key="19">
    <citation type="journal article" date="1989" name="Hum. Immunol.">
        <title>No difference in the nucleotide sequence of the DQ beta beta 1 domain between narcoleptic and healthy individuals with DR2,Dw2.</title>
        <authorList>
            <person name="Uryu N."/>
            <person name="Maeda M."/>
            <person name="Nagata Y."/>
            <person name="Matsuki K."/>
            <person name="Juji T."/>
            <person name="Honda Y."/>
            <person name="Kawai J."/>
            <person name="Ando A."/>
            <person name="Tsuji K."/>
            <person name="Inoko H."/>
        </authorList>
    </citation>
    <scope>NUCLEOTIDE SEQUENCE [GENOMIC DNA] OF 10-126 (ALLELE DQB1*06:02)</scope>
</reference>
<reference key="20">
    <citation type="journal article" date="1989" name="Immunogenetics">
        <title>Complete sequences of DQA1 and DQB1 cDNA clones corresponding to the DQw4 specificity.</title>
        <authorList>
            <person name="Jonsson A.-K."/>
            <person name="Andersson L."/>
            <person name="Rask L."/>
        </authorList>
    </citation>
    <scope>NUCLEOTIDE SEQUENCE [MRNA] OF 33-261 (ALLELE DQB1*04:02)</scope>
</reference>
<reference key="21">
    <citation type="journal article" date="1996" name="Tissue Antigens">
        <title>Different contribution of HLA-DR and -DQ genes in susceptibility and resistance to insulin-dependent diabetes mellitus (IDDM).</title>
        <authorList>
            <person name="Yasunaga S."/>
            <person name="Kimura A."/>
            <person name="Hamaguchi K."/>
            <person name="Ronningen K.S."/>
            <person name="Sasazuki T."/>
        </authorList>
    </citation>
    <scope>NUCLEOTIDE SEQUENCE [MRNA] OF 33-261 (ALLELES DQB1*03:03; DQB1*05:01; DQB1*05:03; DQB1*06:01; DQB1*06:02; DQB1*06:03 AND DQB1*06:04)</scope>
    <scope>NUCLEOTIDE SEQUENCE [MRNA] OF 33-126 (ALLELE DQB1*03:01)</scope>
</reference>
<reference key="22">
    <citation type="journal article" date="2000" name="Tissue Antigens">
        <title>Identification by sequencing based typing and complete coding region analysis of three new HLA class II alleles: DRB3*0210, DRB3*0211 and DQB1*0310.</title>
        <authorList>
            <person name="Balas A."/>
            <person name="Santos S."/>
            <person name="Aviles M.J."/>
            <person name="Garcia-Sanchez F."/>
            <person name="Lillo R."/>
            <person name="Vicario J.L."/>
        </authorList>
    </citation>
    <scope>NUCLEOTIDE SEQUENCE [MRNA] OF 33-261 (ALLELE DQB1*03:10)</scope>
</reference>
<reference key="23">
    <citation type="submission" date="1996-01" db="EMBL/GenBank/DDBJ databases">
        <authorList>
            <person name="Yasunaga S."/>
        </authorList>
    </citation>
    <scope>NUCLEOTIDE SEQUENCE [MRNA] OF 33-261 (ALLELE DQB1*06:09)</scope>
</reference>
<reference key="24">
    <citation type="journal article" date="1994" name="Hum. Immunol.">
        <title>HLA-DQB1*0305 and -DQB1*0304 alleles among Sardinians. Evolutionary and practical implications for oligotyping.</title>
        <authorList>
            <person name="Cucca F."/>
            <person name="Frau F."/>
            <person name="Lampis R."/>
            <person name="Floris M."/>
            <person name="Argiolas L."/>
            <person name="Macis D."/>
            <person name="Cao A."/>
            <person name="De Virgiliis S."/>
            <person name="Congia M."/>
        </authorList>
    </citation>
    <scope>NUCLEOTIDE SEQUENCE [GENOMIC DNA] OF 33-231 (ALLELES DQB1*03:04 AND DQB1*03:05)</scope>
</reference>
<reference key="25">
    <citation type="journal article" date="1983" name="Hoppe-Seyler's Z. Physiol. Chem.">
        <title>Primary structure of human class II histocompatibility antigens 3rd communication. Amino acid sequence comparison between DR and DC subclass antigens derived from a lymphoblastoid B cell line homozygous at the HLA loci (HLA-A3,3; B7,7; Dw2,2; DR2,2: MT1,1; Dc1,1: MB1,1).</title>
        <authorList>
            <person name="Goetz H."/>
            <person name="Kratzin H."/>
            <person name="Thinnes F.P."/>
            <person name="Yang C.-Y."/>
            <person name="Kruse T."/>
            <person name="Pauly E."/>
            <person name="Koelbel S."/>
            <person name="Egert G."/>
            <person name="Wernet P."/>
            <person name="Hilschmann N."/>
        </authorList>
    </citation>
    <scope>PROTEIN SEQUENCE OF 33-181 AND 200-230 (ALLELE DQB1*06:02)</scope>
</reference>
<reference key="26">
    <citation type="journal article" date="1990" name="J. Immunol.">
        <title>Two divergent routes of evolution gave rise to the DRw13 haplotypes.</title>
        <authorList>
            <person name="Lee K.W."/>
            <person name="Johnson A.H."/>
            <person name="Hurley C.K."/>
        </authorList>
    </citation>
    <scope>NUCLEOTIDE SEQUENCE [MRNA] OF 33-140 (ALLELE DQB1*06:05)</scope>
</reference>
<reference key="27">
    <citation type="journal article" date="1986" name="J. Immunol.">
        <title>Analysis of DR-beta and DQ-beta chain cDNA clones from a DR7 haplotype.</title>
        <authorList>
            <person name="Karr R.W."/>
            <person name="Gregersen P.K."/>
            <person name="Obata F."/>
            <person name="Goldberg D."/>
            <person name="Maccari J."/>
            <person name="Alber C."/>
            <person name="Silver J."/>
        </authorList>
    </citation>
    <scope>NUCLEOTIDE SEQUENCE [MRNA] OF 33-126 (ALLELE DQB1*02:01)</scope>
</reference>
<reference key="28">
    <citation type="journal article" date="2007" name="Tissue Antigens">
        <title>Identification of a novel allele HLA-DQB1*0622.</title>
        <authorList>
            <person name="Chang Y."/>
            <person name="Fan T.X."/>
            <person name="Santana Z."/>
            <person name="Day N.K."/>
        </authorList>
    </citation>
    <scope>NUCLEOTIDE SEQUENCE [GENOMIC DNA] OF 33-126 (ALLELE DQB1*06:22)</scope>
</reference>
<reference key="29">
    <citation type="journal article" date="1987" name="Immunogenetics">
        <title>Structural and functional variability among DQ beta alleles of DR2 subtypes.</title>
        <authorList>
            <person name="Lee B.S."/>
            <person name="Bell J.I."/>
            <person name="Rust N.A."/>
            <person name="McDevitt H.O."/>
        </authorList>
    </citation>
    <scope>NUCLEOTIDE SEQUENCE [MRNA] OF 33-122 (ALLELE DQB1*06:02)</scope>
</reference>
<reference key="30">
    <citation type="journal article" date="1997" name="Tissue Antigens">
        <title>A novel allele, DQB1*0307, in a West African family.</title>
        <authorList>
            <person name="Thye T."/>
            <person name="Muntau B."/>
            <person name="Stelma F.F."/>
            <person name="Horstmann R.D."/>
        </authorList>
    </citation>
    <scope>NUCLEOTIDE SEQUENCE [GENOMIC DNA] OF 33-107 (ALLELE DQB1*03:07)</scope>
</reference>
<reference key="31">
    <citation type="journal article" date="2001" name="Tissue Antigens">
        <title>Identification of a novel HLA-DQB1*06 allele, DQB1*0618.</title>
        <authorList>
            <person name="Casamitjana N."/>
            <person name="Gil J."/>
            <person name="Campos E."/>
            <person name="Santos M."/>
            <person name="Nogues N."/>
            <person name="Ribera A."/>
            <person name="Palou E."/>
        </authorList>
    </citation>
    <scope>NUCLEOTIDE SEQUENCE [GENOMIC DNA] OF 37-126 (ALLELE DQB1*06:18)</scope>
</reference>
<reference key="32">
    <citation type="submission" date="2001-03" db="EMBL/GenBank/DDBJ databases">
        <title>A new DQB1*0602 variant found in Australian Caucasian.</title>
        <authorList>
            <person name="Bowman S."/>
            <person name="Diviney M."/>
            <person name="Dunckley H."/>
            <person name="Holdsworth R."/>
            <person name="Varney M."/>
        </authorList>
    </citation>
    <scope>NUCLEOTIDE SEQUENCE [GENOMIC DNA] OF 37-126 (ALLELE DQB1*06:19)</scope>
</reference>
<reference key="33">
    <citation type="journal article" date="1997" name="Tissue Antigens">
        <title>Identification of a new DQB1*0613 allele in a family.</title>
        <authorList>
            <person name="Hsu S.H."/>
            <person name="Robbins F.M."/>
            <person name="Modelo R.B."/>
            <person name="Brunner J."/>
            <person name="Flomenberg N."/>
        </authorList>
    </citation>
    <scope>NUCLEOTIDE SEQUENCE [GENOMIC DNA] OF 37-121 (ALLELE DQB1*06:13)</scope>
</reference>
<reference key="34">
    <citation type="submission" date="2009-03" db="EMBL/GenBank/DDBJ databases">
        <title>New HLA-DQB1*06 allele found in a voluntary blood stem cell donor.</title>
        <authorList>
            <person name="Skrablin P.S."/>
            <person name="Richter R."/>
            <person name="Seidl C."/>
            <person name="Seifried E."/>
        </authorList>
    </citation>
    <scope>NUCLEOTIDE SEQUENCE [GENOMIC DNA] OF 38-257 (ALLELE DQB1*06:36)</scope>
    <source>
        <tissue>Peripheral blood</tissue>
    </source>
</reference>
<reference key="35">
    <citation type="journal article" date="2007" name="Tissue Antigens">
        <title>HLA-DQB1*0319, a novel HLA-DQB1 allele, shows strong haplotype association to HLA-DRB1*1102.</title>
        <authorList>
            <person name="Witter K."/>
            <person name="Mautner J."/>
            <person name="Albert T."/>
            <person name="Zahn R."/>
            <person name="Kauke T."/>
        </authorList>
    </citation>
    <scope>NUCLEOTIDE SEQUENCE [GENOMIC DNA] OF 38-220 (ALLELE DQB1*03:19)</scope>
</reference>
<reference key="36">
    <citation type="journal article" date="2008" name="Tissue Antigens">
        <title>HLA-DQB1*0634, a novel DQB1 allele found by high-resolution HLA typing of a sibling pair for potential bone marrow transplantation.</title>
        <authorList>
            <person name="Witter K."/>
            <person name="Albert T."/>
            <person name="Zahn R."/>
            <person name="Kauke T."/>
        </authorList>
    </citation>
    <scope>NUCLEOTIDE SEQUENCE [GENOMIC DNA] OF 38-220 (ALLELE DQB1*06:34)</scope>
</reference>
<reference key="37">
    <citation type="journal article" date="2008" name="Tissue Antigens">
        <title>Novel alleles at the HLA-DRB1 and -DQB1 loci.</title>
        <authorList>
            <person name="Lazaro A.M."/>
            <person name="Xiao Y."/>
            <person name="Masaberg C."/>
            <person name="Lebeck L."/>
            <person name="Ng J."/>
            <person name="Hurley C.K."/>
            <person name="Posch P.E."/>
        </authorList>
    </citation>
    <scope>NUCLEOTIDE SEQUENCE [GENOMIC DNA] OF 38-220 (ALLELE DQB1*03:21)</scope>
    <scope>NUCLEOTIDE SEQUENCE [GENOMIC DNA] OF 38-126 (ALLELES DQB1*02:05 AND DQB1*03:20)</scope>
</reference>
<reference key="38">
    <citation type="journal article" date="2009" name="Tissue Antigens">
        <title>Sequence-based HLA high-resolution retyping of a bone marrow donor/recipient pair reveals the novel HLA allele DQB1*0322.</title>
        <authorList>
            <person name="Witter K."/>
            <person name="Lochmann E."/>
            <person name="Vecchiato C."/>
            <person name="Albert T."/>
            <person name="Zahn R."/>
            <person name="Kauke T."/>
        </authorList>
    </citation>
    <scope>NUCLEOTIDE SEQUENCE [GENOMIC DNA] OF 38-220 (ALLELE DQB1*03:22)</scope>
    <source>
        <tissue>Peripheral blood</tissue>
    </source>
</reference>
<reference key="39">
    <citation type="journal article" date="2009" name="Tissue Antigens">
        <title>DQB1*0323 is the result of a gene conversion event between a DQB1*06 and a DQB1*030303 allele.</title>
        <authorList>
            <person name="Wienzek S."/>
            <person name="Verboom M."/>
            <person name="Blasczyk R."/>
            <person name="Bein G."/>
            <person name="Horn P.A."/>
        </authorList>
    </citation>
    <scope>NUCLEOTIDE SEQUENCE [GENOMIC DNA] OF 38-220 (ALLELE DQB1*03:23)</scope>
    <source>
        <tissue>Peripheral blood</tissue>
    </source>
</reference>
<reference key="40">
    <citation type="submission" date="2003-06" db="EMBL/GenBank/DDBJ databases">
        <title>Identification of a novel HLA-DQB1*02 allele.</title>
        <authorList>
            <person name="Gragg H."/>
            <person name="Cordovado S.K."/>
            <person name="Hendrix M.M."/>
            <person name="Mueller P.W."/>
        </authorList>
    </citation>
    <scope>NUCLEOTIDE SEQUENCE [GENOMIC DNA] OF 38-220 (ALLELE DQB1*02:04)</scope>
</reference>
<reference key="41">
    <citation type="submission" date="2008-05" db="EMBL/GenBank/DDBJ databases">
        <title>Homo sapiens novel MHC class II HLA-DQB1 gene HLA-DQB1*03 novel allele, exons 2 and 3.</title>
        <authorList>
            <person name="Thompson E.M."/>
            <person name="Mehdizadeh Kashi Z."/>
            <person name="Martin R.K."/>
        </authorList>
    </citation>
    <scope>NUCLEOTIDE SEQUENCE [GENOMIC DNA] OF 38-220 (ALLELE DQB1*03:25)</scope>
</reference>
<reference key="42">
    <citation type="submission" date="2008-12" db="EMBL/GenBank/DDBJ databases">
        <title>A new HLA-DQB allele, identified by routine sequencing.</title>
        <authorList>
            <person name="Michaud C."/>
            <person name="Giannoli C."/>
            <person name="Favre Victoire I."/>
            <person name="Dubois V."/>
        </authorList>
    </citation>
    <scope>NUCLEOTIDE SEQUENCE [GENOMIC DNA] OF 38-220 (ALLELE DQB1*03:24)</scope>
</reference>
<reference key="43">
    <citation type="submission" date="2009-09" db="EMBL/GenBank/DDBJ databases">
        <title>New alleles found during routine SBT HLA typing.</title>
        <authorList>
            <person name="Anholts J.D.H."/>
        </authorList>
    </citation>
    <scope>NUCLEOTIDE SEQUENCE [GENOMIC DNA] OF 38-220 (ALLELES DQB1*06:38 AND DQB1*06:39)</scope>
    <source>
        <tissue>Blood</tissue>
    </source>
</reference>
<reference key="44">
    <citation type="journal article" date="1996" name="Tissue Antigens">
        <title>Characterization of a new DQB1 allele (DQB1*0610) which differs from DQB1*0602 at the highly polymorphic 57-codon.</title>
        <authorList>
            <person name="Mersch G."/>
            <person name="Semana G."/>
            <person name="De Canck I."/>
            <person name="Jannes G."/>
            <person name="Rombout A."/>
            <person name="Sterker G."/>
            <person name="Rossau R."/>
        </authorList>
    </citation>
    <scope>NUCLEOTIDE SEQUENCE [GENOMIC DNA] OF 38-126 (ALLELE DQB1*06:10)</scope>
</reference>
<reference key="45">
    <citation type="journal article" date="1996" name="Tissue Antigens">
        <title>A new HLA-DQB1*0306 allele sharing motifs from DQB1*03032 and DQB1*04 sequences.</title>
        <authorList>
            <person name="Saito S."/>
            <person name="Ota S."/>
            <person name="Hashizume K."/>
            <person name="Yamada E."/>
            <person name="Kaneshige T."/>
            <person name="Hashimoto M."/>
            <person name="Oguchi H."/>
            <person name="Ishii E."/>
            <person name="Fukushima H."/>
        </authorList>
    </citation>
    <scope>NUCLEOTIDE SEQUENCE [GENOMIC DNA] OF 38-126 (ALLELE DQB1*03:06)</scope>
    <source>
        <tissue>Blood</tissue>
    </source>
</reference>
<reference key="46">
    <citation type="journal article" date="2004" name="Tissue Antigens">
        <title>Identification of two novel HLA class II alleles, DQB1*0311 and DQB1*0620.</title>
        <authorList>
            <person name="Hogbin J.P."/>
            <person name="Greville W."/>
            <person name="Chapman G."/>
            <person name="Kennedy A."/>
            <person name="Velickovic Z.M."/>
            <person name="Dunckley H."/>
        </authorList>
    </citation>
    <scope>NUCLEOTIDE SEQUENCE [GENOMIC DNA] OF 38-126 (ALLELE DQB1*03:11)</scope>
    <scope>NUCLEOTIDE SEQUENCE [GENOMIC DNA] OF 41-120 (ALLELE DQB1*06:20)</scope>
</reference>
<reference key="47">
    <citation type="journal article" date="2005" name="Hum. Immunol.">
        <title>A novel DQB1*03 allele revealed by rSSOP and identified by SBT.</title>
        <authorList>
            <person name="Chen D.-F."/>
            <person name="DeOliveira A."/>
            <person name="Peplinski S."/>
            <person name="Herczyk W."/>
            <person name="Reinsmoen N.L."/>
        </authorList>
    </citation>
    <scope>NUCLEOTIDE SEQUENCE [GENOMIC DNA] OF 38-126 (ALLELE DQB1*03:16)</scope>
</reference>
<reference key="48">
    <citation type="journal article" date="2005" name="Tissue Antigens">
        <title>Identification of a novel HLA-DQB1 allele, DQB1*0314, by sequence-based typing in the Korean population.</title>
        <authorList>
            <person name="Gu H."/>
            <person name="Kimm K."/>
            <person name="Lee J.K."/>
            <person name="Oh B."/>
        </authorList>
    </citation>
    <scope>NUCLEOTIDE SEQUENCE [GENOMIC DNA] OF 38-126 (ALLELE DQB1*03:14)</scope>
</reference>
<reference key="49">
    <citation type="journal article" date="2007" name="Tissue Antigens">
        <title>A novel HLA-DQB1*06 allele, DQB1*0628, found through routine sequence-based HLA typing and confirmation of DQB1*060302.</title>
        <authorList>
            <person name="Witter K."/>
            <person name="Albert T."/>
            <person name="Zahn R."/>
            <person name="Kauke T."/>
        </authorList>
    </citation>
    <scope>NUCLEOTIDE SEQUENCE [GENOMIC DNA] OF 38-126 (ALLELE DQB1*06:28)</scope>
</reference>
<reference key="50">
    <citation type="journal article" date="2008" name="Tissue Antigens">
        <title>Identification of a novel HLA-DQB1 allele, HLA-DQB1*0632.</title>
        <authorList>
            <person name="Emmerich F."/>
            <person name="Schonemann C."/>
            <person name="Diederich G."/>
            <person name="Horn P.A."/>
            <person name="Salama A."/>
        </authorList>
    </citation>
    <scope>NUCLEOTIDE SEQUENCE [GENOMIC DNA] OF 38-126 (ALLELE DQB1*06:32)</scope>
    <source>
        <tissue>Blood</tissue>
    </source>
</reference>
<reference key="51">
    <citation type="journal article" date="2009" name="Tissue Antigens">
        <title>Two new HLA-DQB alleles routinely identified by sequence-based typing: DQB1*030103 and DQB1*0505.</title>
        <authorList>
            <person name="Giannoli C."/>
            <person name="Paturel L."/>
            <person name="Favre-Victoire I."/>
            <person name="Bera O."/>
            <person name="Dubois V."/>
        </authorList>
    </citation>
    <scope>NUCLEOTIDE SEQUENCE [GENOMIC DNA] OF 38-126 (ALLELE DQB1*05:05)</scope>
</reference>
<reference key="52">
    <citation type="submission" date="1995-10" db="EMBL/GenBank/DDBJ databases">
        <title>A novel DQB1*02 allele.</title>
        <authorList>
            <person name="Olerup O.H."/>
        </authorList>
    </citation>
    <scope>NUCLEOTIDE SEQUENCE [GENOMIC DNA] OF 38-126 (ALLELE DQB1*02:03)</scope>
</reference>
<reference key="53">
    <citation type="submission" date="1997-11" db="EMBL/GenBank/DDBJ databases">
        <title>Detection of a new DQB1 allele.</title>
        <authorList>
            <person name="Rugg J."/>
            <person name="Blanton M."/>
            <person name="Whitacre L."/>
            <person name="Balakrishnan K."/>
            <person name="Lebeer K."/>
            <person name="Van Reybroeck G."/>
            <person name="Mersch G."/>
        </authorList>
    </citation>
    <scope>NUCLEOTIDE SEQUENCE [GENOMIC DNA] OF 38-126 (ALLELE DQB1*03:05)</scope>
</reference>
<reference key="54">
    <citation type="submission" date="1998-10" db="EMBL/GenBank/DDBJ databases">
        <title>Two novel DQB1*06 alleles, identified by reverse line blot assay.</title>
        <authorList>
            <person name="Shah A."/>
            <person name="Ross J."/>
            <person name="Chenery P."/>
            <person name="Holman R."/>
            <person name="Madrigal A."/>
            <person name="Little A.M."/>
        </authorList>
    </citation>
    <scope>NUCLEOTIDE SEQUENCE [GENOMIC DNA] OF 38-126 (ALLELE DQB1*06:15)</scope>
</reference>
<reference key="55">
    <citation type="submission" date="2001-01" db="EMBL/GenBank/DDBJ databases">
        <title>A new variant form of the HLA DQB1*0305 allele.</title>
        <authorList>
            <person name="Moine A."/>
        </authorList>
    </citation>
    <scope>NUCLEOTIDE SEQUENCE [GENOMIC DNA] OF 38-126 (ALLELE DQB1*03:05)</scope>
    <source>
        <tissue>Peripheral blood</tissue>
    </source>
</reference>
<reference key="56">
    <citation type="submission" date="2002-01" db="EMBL/GenBank/DDBJ databases">
        <title>Homo sapiens HLA-DQB1*0312 allele, exon 2.</title>
        <authorList>
            <person name="Schwarz K."/>
            <person name="Zenz C."/>
        </authorList>
    </citation>
    <scope>NUCLEOTIDE SEQUENCE [GENOMIC DNA] OF 38-126 (ALLELE DQB1*03:12)</scope>
</reference>
<reference key="57">
    <citation type="submission" date="2002-02" db="EMBL/GenBank/DDBJ databases">
        <title>Novel human HLA-DQB1 allele identified in potential bone marrow donors.</title>
        <authorList>
            <person name="Wu J."/>
            <person name="Bassinger S."/>
            <person name="Williams T.M."/>
        </authorList>
    </citation>
    <scope>NUCLEOTIDE SEQUENCE [GENOMIC DNA] OF 38-126 (ALLELE DQB1*03:13)</scope>
</reference>
<reference key="58">
    <citation type="submission" date="2002-12" db="EMBL/GenBank/DDBJ databases">
        <title>Identification of a new HLA-DQB1*06 allele by INNO-LiPA.</title>
        <authorList>
            <person name="De Canck I."/>
        </authorList>
    </citation>
    <scope>NUCLEOTIDE SEQUENCE [GENOMIC DNA] OF 38-126 (ALLELE DQB1*06:21)</scope>
</reference>
<reference key="59">
    <citation type="submission" date="2003-02" db="EMBL/GenBank/DDBJ databases">
        <title>Novel DQB1*06 alleles.</title>
        <authorList>
            <person name="Bassinger S."/>
            <person name="Wu J."/>
            <person name="Zhang Q."/>
            <person name="Brinkema C."/>
            <person name="Smith A.G."/>
            <person name="Williams T.M."/>
        </authorList>
    </citation>
    <scope>NUCLEOTIDE SEQUENCE [GENOMIC DNA] OF 38-126 (ALLELE DQB1*06:17)</scope>
</reference>
<reference key="60">
    <citation type="submission" date="2004-08" db="EMBL/GenBank/DDBJ databases">
        <title>Characterization of a new HLA-DQB1 allele by direct sequencing.</title>
        <authorList>
            <person name="Hirv K."/>
            <person name="Krauss A."/>
            <person name="Mytilineos J."/>
        </authorList>
    </citation>
    <scope>NUCLEOTIDE SEQUENCE [GENOMIC DNA] OF 38-126 (ALLELE DQB1*06:23)</scope>
</reference>
<reference key="61">
    <citation type="submission" date="2004-11" db="EMBL/GenBank/DDBJ databases">
        <title>Novel HLA-DQB1*03 allele.</title>
        <authorList>
            <person name="Velickovic Z.M."/>
        </authorList>
    </citation>
    <scope>NUCLEOTIDE SEQUENCE [GENOMIC DNA] OF 38-126 (ALLELE DQB1*03:15)</scope>
    <source>
        <tissue>Peripheral blood</tissue>
    </source>
</reference>
<reference key="62">
    <citation type="submission" date="2005-04" db="EMBL/GenBank/DDBJ databases">
        <title>A new HLA-DQB1 allele.</title>
        <authorList>
            <person name="Schranz P."/>
            <person name="Seelig R."/>
            <person name="Seelig H.P."/>
        </authorList>
    </citation>
    <scope>NUCLEOTIDE SEQUENCE [GENOMIC DNA] OF 38-126 (ALLELE DQB1*06:24)</scope>
</reference>
<reference key="63">
    <citation type="submission" date="2005-04" db="EMBL/GenBank/DDBJ databases">
        <title>Homo sapiens HLA-DQ gene for MHC class2 antigen, partial cds, allele: HLA-DQB1*060401V.</title>
        <authorList>
            <person name="Watabe K."/>
            <person name="Hashimoto M."/>
        </authorList>
    </citation>
    <scope>NUCLEOTIDE SEQUENCE [GENOMIC DNA] OF 38-126 (ALLELE DQB1*06:25)</scope>
</reference>
<reference key="64">
    <citation type="submission" date="2005-07" db="EMBL/GenBank/DDBJ databases">
        <title>A novel DQB1 allele found in Taiwan.</title>
        <authorList>
            <person name="Chu C.-C."/>
        </authorList>
    </citation>
    <scope>NUCLEOTIDE SEQUENCE [GENOMIC DNA] OF 38-126 (ALLELE DQB1*03:17)</scope>
</reference>
<reference key="65">
    <citation type="submission" date="2005-09" db="EMBL/GenBank/DDBJ databases">
        <title>High resolution genotyping of HLA-DQB1 exon 2 and 3.</title>
        <authorList>
            <person name="Hendrix M.M."/>
            <person name="Cordovado S.K."/>
            <person name="Mueller P.W."/>
        </authorList>
    </citation>
    <scope>NUCLEOTIDE SEQUENCE [GENOMIC DNA] OF 38-126 (ALLELE DQB1*03:18)</scope>
</reference>
<reference key="66">
    <citation type="submission" date="2006-09" db="EMBL/GenBank/DDBJ databases">
        <title>A novel HLA-DRQ1*06 allele.</title>
        <authorList>
            <person name="Horn P.A."/>
            <person name="Blasczyk R."/>
        </authorList>
    </citation>
    <scope>NUCLEOTIDE SEQUENCE [GENOMIC DNA] OF 38-126 (ALLELE DQB1*06:29)</scope>
</reference>
<reference key="67">
    <citation type="submission" date="2007-01" db="EMBL/GenBank/DDBJ databases">
        <title>Identification of several new class I and II alleles in routine HLA-testing.</title>
        <authorList>
            <person name="Nieberle I."/>
            <person name="Hirschmann D."/>
            <person name="Woelpl A."/>
        </authorList>
    </citation>
    <scope>NUCLEOTIDE SEQUENCE [GENOMIC DNA] OF 38-126 (ALLELE DQB1*06:31)</scope>
</reference>
<reference key="68">
    <citation type="submission" date="2007-05" db="EMBL/GenBank/DDBJ databases">
        <title>A novel HLA-DQB1*06 allele identified by PCR-SBT in a caucasian NMDP donor.</title>
        <authorList>
            <person name="Yu M."/>
            <person name="Hall J.E."/>
            <person name="Hartman K.J."/>
            <person name="Caparelli E."/>
            <person name="Czech J."/>
            <person name="Smyth E."/>
            <person name="Jennings L."/>
        </authorList>
    </citation>
    <scope>NUCLEOTIDE SEQUENCE [GENOMIC DNA] OF 38-126 (ALLELE DQB1*06:33)</scope>
</reference>
<reference key="69">
    <citation type="submission" date="2008-01" db="EMBL/GenBank/DDBJ databases">
        <title>Characterization of a new HLA-Cw*07 allele.</title>
        <authorList>
            <person name="Vigh A."/>
            <person name="Hirv K."/>
            <person name="Mytilineos J."/>
        </authorList>
    </citation>
    <scope>NUCLEOTIDE SEQUENCE [GENOMIC DNA] OF 38-126 (ALLELE DQB1*04:03)</scope>
</reference>
<reference key="70">
    <citation type="submission" date="2009-07" db="EMBL/GenBank/DDBJ databases">
        <title>A new variant of HLA-DQB1*06.</title>
        <authorList>
            <person name="Fuerst D."/>
            <person name="Mytilineos J."/>
        </authorList>
    </citation>
    <scope>NUCLEOTIDE SEQUENCE [GENOMIC DNA] OF 38-126 (ALLELE DQB1*06:37)</scope>
</reference>
<reference key="71">
    <citation type="submission" date="2009-09" db="EMBL/GenBank/DDBJ databases">
        <title>Novel DQB1*03 found in CAP test sample.</title>
        <authorList>
            <person name="Yang K."/>
            <person name="Chen M."/>
        </authorList>
    </citation>
    <scope>NUCLEOTIDE SEQUENCE [GENOMIC DNA] OF 38-126 (ALLELE DQB1*03:26)</scope>
</reference>
<reference key="72">
    <citation type="journal article" date="1999" name="Tissue Antigens">
        <title>Identification of a novel DQB1 allele DBQ1*0616.</title>
        <authorList>
            <person name="Luo M."/>
            <person name="Blanchard J."/>
            <person name="Maclean I."/>
            <person name="Brunham R."/>
        </authorList>
    </citation>
    <scope>NUCLEOTIDE SEQUENCE [GENOMIC DNA] OF 38-122 (ALLELE DQB1*06:16)</scope>
</reference>
<reference key="73">
    <citation type="submission" date="2002-04" db="EMBL/GenBank/DDBJ databases">
        <title>Novel HLA-DQB1 allele.</title>
        <authorList>
            <person name="Rizzo M."/>
            <person name="Hurley C.K."/>
        </authorList>
    </citation>
    <scope>NUCLEOTIDE SEQUENCE [GENOMIC DNA] OF 38-115 (ALLELE DQB1*06:30)</scope>
</reference>
<reference key="74">
    <citation type="journal article" date="1998" name="Tissue Antigens">
        <title>A novel DRB3 allele (DRB3*0208), a new allelic variant of DRB1*1502 (DRB1*15023) and two new DQB1 (DQB1*03012 and DQB1*0614) alleles.</title>
        <authorList>
            <person name="Hashemi-tavoularis S."/>
            <person name="Ouellet S."/>
            <person name="Sengar D.P.S."/>
            <person name="Buyse I.M."/>
        </authorList>
    </citation>
    <scope>NUCLEOTIDE SEQUENCE [GENOMIC DNA] OF 41-126 (ALLELE DQB1*06:14)</scope>
    <source>
        <tissue>Blood</tissue>
    </source>
</reference>
<reference key="75">
    <citation type="journal article" date="1996" name="Tissue Antigens">
        <title>Strategy for distinguishing a new DQB1 allele (DQB1*0611) from the closely related DQB1*0602 allele via sequence specific PCR or direct DNA sequencing.</title>
        <authorList>
            <person name="Williams T.M."/>
            <person name="Bassinger S."/>
            <person name="Moehlenkamp C."/>
            <person name="Wu J."/>
            <person name="Montoya G.D."/>
            <person name="Griffith B.B."/>
            <person name="McAuley J.D."/>
            <person name="Goldman S."/>
            <person name="Maurer D.H."/>
            <person name="Troup G.M."/>
        </authorList>
    </citation>
    <scope>NUCLEOTIDE SEQUENCE [GENOMIC DNA] OF 41-125 (ALLELE DQB1*06:11)</scope>
</reference>
<reference key="76">
    <citation type="journal article" date="2006" name="Tissue Antigens">
        <title>HLA-DRB1*0826 and HLA-DQB1*0627, two novel class II alleles identified in blood stem cell donors of Caucasian origin.</title>
        <authorList>
            <person name="Brixner V."/>
            <person name="Mosebach M."/>
            <person name="Schmidt M."/>
            <person name="Hermann S."/>
            <person name="Seifried E."/>
            <person name="Martin H."/>
            <person name="Seidl C."/>
        </authorList>
    </citation>
    <scope>NUCLEOTIDE SEQUENCE [GENOMIC DNA] OF 41-125 (ALLELE DQB1*06:27)</scope>
</reference>
<reference key="77">
    <citation type="submission" date="1998-12" db="EMBL/GenBank/DDBJ databases">
        <authorList>
            <person name="Dinauer D.M."/>
            <person name="Hessner M.J."/>
        </authorList>
    </citation>
    <scope>NUCLEOTIDE SEQUENCE [GENOMIC DNA] OF 41-122 (ALLELES DQB1*06:07 AND DQB1*06:08)</scope>
</reference>
<reference key="78">
    <citation type="journal article" date="1992" name="Tissue Antigens">
        <title>Two novel HLA-DQB1*06 alleles reveal additional heterogeneity of HLA-DQw1.</title>
        <authorList>
            <person name="Fenske T.S."/>
            <person name="Baxter-Lowe L.A."/>
        </authorList>
    </citation>
    <scope>NUCLEOTIDE SEQUENCE [GENOMIC DNA] OF 41-114 (ALLELE DQB1*05:04)</scope>
</reference>
<reference key="79">
    <citation type="journal article" date="1990" name="Proc. Natl. Acad. Sci. U.S.A.">
        <title>Allelic diversification at the class II DQB locus of the mammalian major histocompatibility complex.</title>
        <authorList>
            <person name="Gyllensten U.B."/>
            <person name="Lashkari D."/>
            <person name="Erlich H.A."/>
        </authorList>
    </citation>
    <scope>NUCLEOTIDE SEQUENCE [GENOMIC DNA] OF 53-109 (ALLELE DQB1*02:01)</scope>
</reference>
<reference key="80">
    <citation type="journal article" date="1991" name="Immunogenetics">
        <title>Rapid typing of HLA-DQB1 DNA polymorphism using nonradioactive oligonucleotide probes and amplified DNA.</title>
        <authorList>
            <person name="Bugawan T.L."/>
            <person name="Erlich H.A."/>
        </authorList>
    </citation>
    <scope>NUCLEOTIDE SEQUENCE [GENOMIC DNA] OF 53-109 (ALLELES DQB1*02:01 AND DQB1*06:02)</scope>
</reference>
<reference key="81">
    <citation type="journal article" date="1981" name="Scand. J. Immunol.">
        <title>Evolutionary relationship between HLA-DR antigen beta-chains, HLA-A, B, C antigen subunits and immunoglobulin chains.</title>
        <authorList>
            <person name="Larhammar D."/>
            <person name="Wiman K."/>
            <person name="Schenning L."/>
            <person name="Claesson L."/>
            <person name="Gustafsson K."/>
            <person name="Peterson P.A."/>
            <person name="Rask L."/>
        </authorList>
    </citation>
    <scope>NUCLEOTIDE SEQUENCE [MRNA] OF 135-217 (ALLELE DQB1*02:01)</scope>
</reference>
<reference key="82">
    <citation type="journal article" date="2008" name="Lancet Neurol.">
        <title>CSF hypocretin-1 assessment in sleep and neurological disorders.</title>
        <authorList>
            <person name="Bourgin P."/>
            <person name="Zeitzer J.M."/>
            <person name="Mignot E."/>
        </authorList>
    </citation>
    <scope>POLYMORPHISM</scope>
</reference>
<reference key="83">
    <citation type="journal article" date="1996" name="Cell">
        <title>Invariant chain structure and MHC class II function.</title>
        <authorList>
            <person name="Cresswell P."/>
        </authorList>
    </citation>
    <scope>REVIEW</scope>
</reference>
<reference key="84">
    <citation type="journal article" date="2001" name="Mol. Immunol.">
        <title>Presentation of antigens by MHC class II molecules: getting the most out of them.</title>
        <authorList>
            <person name="Villadangos J.A."/>
        </authorList>
    </citation>
    <scope>REVIEW</scope>
</reference>
<reference key="85">
    <citation type="journal article" date="2008" name="EMBO J.">
        <title>MHC class II molecules on the move for successful antigen presentation.</title>
        <authorList>
            <person name="Rocha N."/>
            <person name="Neefjes J."/>
        </authorList>
    </citation>
    <scope>REVIEW</scope>
</reference>
<reference key="86">
    <citation type="journal article" date="2007" name="Immunity">
        <title>Autophagy in MHC class II presentation: sampling from within.</title>
        <authorList>
            <person name="Menendez-Benito V."/>
            <person name="Neefjes J."/>
        </authorList>
    </citation>
    <scope>REVIEW</scope>
</reference>
<reference key="87">
    <citation type="journal article" date="2009" name="J. Cell Sci.">
        <title>MHC class II transport at a glance.</title>
        <authorList>
            <person name="Berger A.C."/>
            <person name="Roche P.A."/>
        </authorList>
    </citation>
    <scope>REVIEW</scope>
</reference>
<reference key="88">
    <citation type="journal article" date="2009" name="World J. Gastroenterol.">
        <title>CD74 in antigen presentation, inflammation, and cancers of the gastrointestinal tract.</title>
        <authorList>
            <person name="Beswick E.J."/>
            <person name="Reyes V.E."/>
        </authorList>
    </citation>
    <scope>REVIEW</scope>
</reference>
<reference key="89">
    <citation type="journal article" date="2001" name="Nat. Immunol.">
        <title>Structure of a human insulin peptide-HLA-DQ8 complex and susceptibility to type 1 diabetes.</title>
        <authorList>
            <person name="Lee K.H."/>
            <person name="Wucherpfennig K.W."/>
            <person name="Wiley D.C."/>
        </authorList>
    </citation>
    <scope>X-RAY CRYSTALLOGRAPHY (2.4 ANGSTROMS) OF 35-224 OF HLA-DQA1/HLA-DQB1 HETERODIMER IN COMPLEX WITH INS PEPTIDE</scope>
    <scope>SUBUNIT</scope>
    <scope>DISULFIDE BONDS</scope>
</reference>
<reference key="90">
    <citation type="journal article" date="2004" name="Proc. Natl. Acad. Sci. U.S.A.">
        <title>Crystal structure of HLA-DQ0602 that protects against type 1 diabetes and confers strong susceptibility to narcolepsy.</title>
        <authorList>
            <person name="Siebold C."/>
            <person name="Hansen B.E."/>
            <person name="Wyer J.R."/>
            <person name="Harlos K."/>
            <person name="Esnouf R.E."/>
            <person name="Svejgaard A."/>
            <person name="Bell J.I."/>
            <person name="Strominger J.L."/>
            <person name="Jones E.Y."/>
            <person name="Fugger L."/>
        </authorList>
    </citation>
    <scope>X-RAY CRYSTALLOGRAPHY (1.8 ANGSTROMS) OF 35-231 OF HLA-DQA1/HLA-DQB1 HETERODIMER (HLA-DQ0602) IN COMPLEX WITH HCRT PEPTIDE</scope>
    <scope>POLYMORPHISM</scope>
    <scope>SUBUNIT</scope>
    <scope>DISULFIDE BONDS</scope>
</reference>
<reference key="91">
    <citation type="journal article" date="2004" name="Proc. Natl. Acad. Sci. U.S.A.">
        <title>Structural basis for HLA-DQ2-mediated presentation of gluten epitopes in celiac disease.</title>
        <authorList>
            <person name="Kim C.Y."/>
            <person name="Quarsten H."/>
            <person name="Bergseng E."/>
            <person name="Khosla C."/>
            <person name="Sollid L.M."/>
        </authorList>
    </citation>
    <scope>X-RAY CRYSTALLOGRAPHY (2.22 ANGSTROMS) OF 33-230 OF HLA-DQA1/HLA-DQB1 HETERODIMER (DQ2) IN COMPLEX WITH TRITICUM AESTIVUM ALPHA/BETA-GLIADIN PEPTIDE</scope>
    <scope>SUBUNIT</scope>
    <scope>POLYMORPHISM</scope>
</reference>
<reference key="92">
    <citation type="journal article" date="2007" name="Immunity">
        <title>A structural and immunological basis for the role of human leukocyte antigen DQ8 in celiac disease.</title>
        <authorList>
            <person name="Henderson K.N."/>
            <person name="Tye-Din J.A."/>
            <person name="Reid H.H."/>
            <person name="Chen Z."/>
            <person name="Borg N.A."/>
            <person name="Beissbarth T."/>
            <person name="Tatham A."/>
            <person name="Mannering S.I."/>
            <person name="Purcell A.W."/>
            <person name="Dudek N.L."/>
            <person name="van Heel D.A."/>
            <person name="McCluskey J."/>
            <person name="Rossjohn J."/>
            <person name="Anderson R.P."/>
        </authorList>
    </citation>
    <scope>X-RAY CRYSTALLOGRAPHY (2.1 ANGSTROMS) OF 33-224 OF HLA-DQA1/HLA-DQB1 HETERODIMER IN COMPLEX WITH TRITICUM AESTIVUM ALPHA/BETA-GLIADIN PEPTIDE</scope>
    <scope>POLYMORPHISM</scope>
    <scope>SUBUNIT</scope>
    <scope>DISULFIDE BONDS</scope>
</reference>
<reference key="93">
    <citation type="journal article" date="2011" name="BMC Syst. Biol.">
        <title>Initial characterization of the human central proteome.</title>
        <authorList>
            <person name="Burkard T.R."/>
            <person name="Planyavsky M."/>
            <person name="Kaupe I."/>
            <person name="Breitwieser F.P."/>
            <person name="Buerckstuemmer T."/>
            <person name="Bennett K.L."/>
            <person name="Superti-Furga G."/>
            <person name="Colinge J."/>
        </authorList>
    </citation>
    <scope>VARIANT [LARGE SCALE ANALYSIS] ALA-172</scope>
    <scope>IDENTIFICATION BY MASS SPECTROMETRY [LARGE SCALE ANALYSIS]</scope>
</reference>
<dbReference type="EMBL" id="K01499">
    <property type="protein sequence ID" value="AAA98746.1"/>
    <property type="molecule type" value="Genomic_DNA"/>
</dbReference>
<dbReference type="EMBL" id="K02405">
    <property type="protein sequence ID" value="AAA75521.1"/>
    <property type="molecule type" value="Genomic_DNA"/>
</dbReference>
<dbReference type="EMBL" id="X03068">
    <property type="protein sequence ID" value="CAA26872.1"/>
    <property type="molecule type" value="mRNA"/>
</dbReference>
<dbReference type="EMBL" id="M17564">
    <property type="protein sequence ID" value="AAA59765.1"/>
    <property type="molecule type" value="mRNA"/>
</dbReference>
<dbReference type="EMBL" id="M29613">
    <property type="status" value="NOT_ANNOTATED_CDS"/>
    <property type="molecule type" value="Genomic_DNA"/>
</dbReference>
<dbReference type="EMBL" id="M29616">
    <property type="status" value="NOT_ANNOTATED_CDS"/>
    <property type="molecule type" value="Genomic_DNA"/>
</dbReference>
<dbReference type="EMBL" id="M16996">
    <property type="protein sequence ID" value="AAA59770.1"/>
    <property type="molecule type" value="mRNA"/>
</dbReference>
<dbReference type="EMBL" id="M20432">
    <property type="protein sequence ID" value="AAA59769.1"/>
    <property type="molecule type" value="mRNA"/>
</dbReference>
<dbReference type="EMBL" id="M60028">
    <property type="protein sequence ID" value="AAA59755.1"/>
    <property type="molecule type" value="mRNA"/>
</dbReference>
<dbReference type="EMBL" id="X96420">
    <property type="protein sequence ID" value="CAA65280.1"/>
    <property type="molecule type" value="mRNA"/>
</dbReference>
<dbReference type="EMBL" id="U92032">
    <property type="protein sequence ID" value="AAB91991.1"/>
    <property type="molecule type" value="Genomic_DNA"/>
</dbReference>
<dbReference type="EMBL" id="AY663393">
    <property type="protein sequence ID" value="AAU87973.1"/>
    <property type="molecule type" value="Genomic_DNA"/>
</dbReference>
<dbReference type="EMBL" id="AY663394">
    <property type="protein sequence ID" value="AAU87977.1"/>
    <property type="molecule type" value="Genomic_DNA"/>
</dbReference>
<dbReference type="EMBL" id="AY663397">
    <property type="protein sequence ID" value="AAU87986.1"/>
    <property type="molecule type" value="Genomic_DNA"/>
</dbReference>
<dbReference type="EMBL" id="AY663409">
    <property type="protein sequence ID" value="AAU88017.1"/>
    <property type="molecule type" value="Genomic_DNA"/>
</dbReference>
<dbReference type="EMBL" id="AY663404">
    <property type="protein sequence ID" value="AAU88002.1"/>
    <property type="molecule type" value="Genomic_DNA"/>
</dbReference>
<dbReference type="EMBL" id="AY663410">
    <property type="protein sequence ID" value="AAU88020.1"/>
    <property type="molecule type" value="Genomic_DNA"/>
</dbReference>
<dbReference type="EMBL" id="AY663412">
    <property type="protein sequence ID" value="AAU88027.1"/>
    <property type="molecule type" value="Genomic_DNA"/>
</dbReference>
<dbReference type="EMBL" id="AY656681">
    <property type="protein sequence ID" value="AAV71028.1"/>
    <property type="molecule type" value="mRNA"/>
</dbReference>
<dbReference type="EMBL" id="AY656682">
    <property type="protein sequence ID" value="AAV71029.1"/>
    <property type="molecule type" value="mRNA"/>
</dbReference>
<dbReference type="EMBL" id="AY656683">
    <property type="protein sequence ID" value="AAV71030.1"/>
    <property type="molecule type" value="mRNA"/>
</dbReference>
<dbReference type="EMBL" id="BX927168">
    <property type="status" value="NOT_ANNOTATED_CDS"/>
    <property type="molecule type" value="Genomic_DNA"/>
</dbReference>
<dbReference type="EMBL" id="CR753846">
    <property type="status" value="NOT_ANNOTATED_CDS"/>
    <property type="molecule type" value="Genomic_DNA"/>
</dbReference>
<dbReference type="EMBL" id="CR933859">
    <property type="status" value="NOT_ANNOTATED_CDS"/>
    <property type="molecule type" value="Genomic_DNA"/>
</dbReference>
<dbReference type="EMBL" id="BC012106">
    <property type="protein sequence ID" value="AAH12106.1"/>
    <property type="molecule type" value="mRNA"/>
</dbReference>
<dbReference type="EMBL" id="M25327">
    <property type="protein sequence ID" value="AAA59677.1"/>
    <property type="molecule type" value="mRNA"/>
</dbReference>
<dbReference type="EMBL" id="U66400">
    <property type="protein sequence ID" value="AAB51698.1"/>
    <property type="molecule type" value="mRNA"/>
</dbReference>
<dbReference type="EMBL" id="U83582">
    <property type="protein sequence ID" value="AAB41231.1"/>
    <property type="molecule type" value="mRNA"/>
</dbReference>
<dbReference type="EMBL" id="AH002887">
    <property type="protein sequence ID" value="AAA59762.1"/>
    <property type="molecule type" value="Genomic_DNA"/>
</dbReference>
<dbReference type="EMBL" id="M26042">
    <property type="protein sequence ID" value="AAA36270.1"/>
    <property type="molecule type" value="mRNA"/>
</dbReference>
<dbReference type="EMBL" id="M33907">
    <property type="protein sequence ID" value="AAA52672.1"/>
    <property type="molecule type" value="mRNA"/>
</dbReference>
<dbReference type="EMBL" id="L34096">
    <property type="protein sequence ID" value="AAC41964.1"/>
    <property type="molecule type" value="mRNA"/>
</dbReference>
<dbReference type="EMBL" id="L34098">
    <property type="protein sequence ID" value="AAC41966.1"/>
    <property type="molecule type" value="mRNA"/>
</dbReference>
<dbReference type="EMBL" id="L34101">
    <property type="protein sequence ID" value="AAC41969.1"/>
    <property type="molecule type" value="mRNA"/>
</dbReference>
<dbReference type="EMBL" id="L34103">
    <property type="protein sequence ID" value="AAC41971.1"/>
    <property type="molecule type" value="mRNA"/>
</dbReference>
<dbReference type="EMBL" id="L34104">
    <property type="protein sequence ID" value="AAC41972.1"/>
    <property type="molecule type" value="mRNA"/>
</dbReference>
<dbReference type="EMBL" id="L34105">
    <property type="protein sequence ID" value="AAC41973.1"/>
    <property type="molecule type" value="mRNA"/>
</dbReference>
<dbReference type="EMBL" id="L34106">
    <property type="protein sequence ID" value="AAC41974.1"/>
    <property type="molecule type" value="mRNA"/>
</dbReference>
<dbReference type="EMBL" id="L34107">
    <property type="protein sequence ID" value="AAC41975.1"/>
    <property type="molecule type" value="mRNA"/>
</dbReference>
<dbReference type="EMBL" id="AF195245">
    <property type="protein sequence ID" value="AAF28315.1"/>
    <property type="molecule type" value="mRNA"/>
</dbReference>
<dbReference type="EMBL" id="L42626">
    <property type="protein sequence ID" value="AAA85335.1"/>
    <property type="molecule type" value="mRNA"/>
</dbReference>
<dbReference type="EMBL" id="X76553">
    <property type="status" value="NOT_ANNOTATED_CDS"/>
    <property type="molecule type" value="mRNA"/>
</dbReference>
<dbReference type="EMBL" id="X76554">
    <property type="status" value="NOT_ANNOTATED_CDS"/>
    <property type="molecule type" value="mRNA"/>
</dbReference>
<dbReference type="EMBL" id="M59800">
    <property type="protein sequence ID" value="AAA64235.1"/>
    <property type="molecule type" value="mRNA"/>
</dbReference>
<dbReference type="EMBL" id="M14189">
    <property type="protein sequence ID" value="AAA36268.1"/>
    <property type="molecule type" value="mRNA"/>
</dbReference>
<dbReference type="EMBL" id="AY672649">
    <property type="protein sequence ID" value="AAT77952.1"/>
    <property type="molecule type" value="Genomic_DNA"/>
</dbReference>
<dbReference type="EMBL" id="M17207">
    <property type="protein sequence ID" value="AAA59697.1"/>
    <property type="molecule type" value="mRNA"/>
</dbReference>
<dbReference type="EMBL" id="Z49215">
    <property type="status" value="NOT_ANNOTATED_CDS"/>
    <property type="molecule type" value="Genomic_DNA"/>
</dbReference>
<dbReference type="EMBL" id="AY026349">
    <property type="protein sequence ID" value="AAK01944.1"/>
    <property type="molecule type" value="Genomic_DNA"/>
</dbReference>
<dbReference type="EMBL" id="AF091305">
    <property type="protein sequence ID" value="AAC64403.2"/>
    <property type="status" value="ALT_SEQ"/>
    <property type="molecule type" value="Genomic_DNA"/>
</dbReference>
<dbReference type="EMBL" id="U77344">
    <property type="protein sequence ID" value="AAB19215.1"/>
    <property type="molecule type" value="Genomic_DNA"/>
</dbReference>
<dbReference type="EMBL" id="FN256435">
    <property type="protein sequence ID" value="CAX62164.1"/>
    <property type="molecule type" value="Genomic_DNA"/>
</dbReference>
<dbReference type="EMBL" id="FN256435">
    <property type="protein sequence ID" value="CAX62165.1"/>
    <property type="molecule type" value="Genomic_DNA"/>
</dbReference>
<dbReference type="EMBL" id="AM400970">
    <property type="protein sequence ID" value="CAL47037.1"/>
    <property type="molecule type" value="Genomic_DNA"/>
</dbReference>
<dbReference type="EMBL" id="AM421131">
    <property type="protein sequence ID" value="CAM07104.1"/>
    <property type="molecule type" value="Genomic_DNA"/>
</dbReference>
<dbReference type="EMBL" id="EF484936">
    <property type="protein sequence ID" value="ABO87661.1"/>
    <property type="molecule type" value="Genomic_DNA"/>
</dbReference>
<dbReference type="EMBL" id="EF484939">
    <property type="protein sequence ID" value="ABO87664.1"/>
    <property type="molecule type" value="Genomic_DNA"/>
</dbReference>
<dbReference type="EMBL" id="EU275158">
    <property type="protein sequence ID" value="ABY26531.1"/>
    <property type="molecule type" value="Genomic_DNA"/>
</dbReference>
<dbReference type="EMBL" id="AM944346">
    <property type="protein sequence ID" value="CAQ16179.1"/>
    <property type="molecule type" value="Genomic_DNA"/>
</dbReference>
<dbReference type="EMBL" id="FM200854">
    <property type="protein sequence ID" value="CAR31119.1"/>
    <property type="molecule type" value="Genomic_DNA"/>
</dbReference>
<dbReference type="EMBL" id="AH013029">
    <property type="protein sequence ID" value="AAP93137.1"/>
    <property type="molecule type" value="Genomic_DNA"/>
</dbReference>
<dbReference type="EMBL" id="EU770203">
    <property type="protein sequence ID" value="ACF16333.1"/>
    <property type="molecule type" value="Genomic_DNA"/>
</dbReference>
<dbReference type="EMBL" id="FM955320">
    <property type="protein sequence ID" value="CAW24712.1"/>
    <property type="molecule type" value="Genomic_DNA"/>
</dbReference>
<dbReference type="EMBL" id="FN552709">
    <property type="protein sequence ID" value="CBF35736.1"/>
    <property type="molecule type" value="Genomic_DNA"/>
</dbReference>
<dbReference type="EMBL" id="FN552710">
    <property type="protein sequence ID" value="CBF35739.1"/>
    <property type="molecule type" value="Genomic_DNA"/>
</dbReference>
<dbReference type="EMBL" id="X86327">
    <property type="status" value="NOT_ANNOTATED_CDS"/>
    <property type="molecule type" value="Genomic_DNA"/>
</dbReference>
<dbReference type="EMBL" id="D78569">
    <property type="protein sequence ID" value="BAA11413.1"/>
    <property type="molecule type" value="Genomic_DNA"/>
</dbReference>
<dbReference type="EMBL" id="AF439338">
    <property type="protein sequence ID" value="AAL35222.1"/>
    <property type="molecule type" value="Genomic_DNA"/>
</dbReference>
<dbReference type="EMBL" id="AF384556">
    <property type="protein sequence ID" value="AAM53072.1"/>
    <property type="molecule type" value="Genomic_DNA"/>
</dbReference>
<dbReference type="EMBL" id="DQ026226">
    <property type="protein sequence ID" value="AAY89656.1"/>
    <property type="molecule type" value="Genomic_DNA"/>
</dbReference>
<dbReference type="EMBL" id="AY762968">
    <property type="protein sequence ID" value="AAV97949.1"/>
    <property type="molecule type" value="Genomic_DNA"/>
</dbReference>
<dbReference type="EMBL" id="AM181332">
    <property type="protein sequence ID" value="CAJ57391.1"/>
    <property type="status" value="ALT_SEQ"/>
    <property type="molecule type" value="Genomic_DNA"/>
</dbReference>
<dbReference type="EMBL" id="AM691798">
    <property type="protein sequence ID" value="CAM88661.1"/>
    <property type="molecule type" value="Genomic_DNA"/>
</dbReference>
<dbReference type="EMBL" id="AM259942">
    <property type="protein sequence ID" value="CAJ90956.1"/>
    <property type="molecule type" value="Genomic_DNA"/>
</dbReference>
<dbReference type="EMBL" id="U39090">
    <property type="protein sequence ID" value="AAB02681.1"/>
    <property type="molecule type" value="Genomic_DNA"/>
</dbReference>
<dbReference type="EMBL" id="AJ003005">
    <property type="status" value="NOT_ANNOTATED_CDS"/>
    <property type="molecule type" value="Genomic_DNA"/>
</dbReference>
<dbReference type="EMBL" id="AJ012156">
    <property type="protein sequence ID" value="CAA09929.1"/>
    <property type="molecule type" value="Genomic_DNA"/>
</dbReference>
<dbReference type="EMBL" id="AJ290396">
    <property type="protein sequence ID" value="CAC27418.1"/>
    <property type="molecule type" value="Genomic_DNA"/>
</dbReference>
<dbReference type="EMBL" id="AF469118">
    <property type="protein sequence ID" value="AAL77085.1"/>
    <property type="molecule type" value="Genomic_DNA"/>
</dbReference>
<dbReference type="EMBL" id="AF479569">
    <property type="protein sequence ID" value="AAM09472.1"/>
    <property type="molecule type" value="Genomic_DNA"/>
</dbReference>
<dbReference type="EMBL" id="AJ535315">
    <property type="protein sequence ID" value="CAD59445.2"/>
    <property type="molecule type" value="Genomic_DNA"/>
</dbReference>
<dbReference type="EMBL" id="AF181983">
    <property type="protein sequence ID" value="AAD54423.2"/>
    <property type="molecule type" value="Genomic_DNA"/>
</dbReference>
<dbReference type="EMBL" id="AY733062">
    <property type="protein sequence ID" value="AAU33811.1"/>
    <property type="molecule type" value="Genomic_DNA"/>
</dbReference>
<dbReference type="EMBL" id="AJ854065">
    <property type="protein sequence ID" value="CAH69441.1"/>
    <property type="molecule type" value="Genomic_DNA"/>
</dbReference>
<dbReference type="EMBL" id="AJ964903">
    <property type="protein sequence ID" value="CAI79639.1"/>
    <property type="molecule type" value="Genomic_DNA"/>
</dbReference>
<dbReference type="EMBL" id="AB211231">
    <property type="protein sequence ID" value="BAD95610.1"/>
    <property type="molecule type" value="Genomic_DNA"/>
</dbReference>
<dbReference type="EMBL" id="DQ114427">
    <property type="protein sequence ID" value="AAZ20753.1"/>
    <property type="molecule type" value="Genomic_DNA"/>
</dbReference>
<dbReference type="EMBL" id="DQ227421">
    <property type="protein sequence ID" value="ABB05231.1"/>
    <property type="molecule type" value="Genomic_DNA"/>
</dbReference>
<dbReference type="EMBL" id="AM403489">
    <property type="protein sequence ID" value="CAL48285.1"/>
    <property type="molecule type" value="Genomic_DNA"/>
</dbReference>
<dbReference type="EMBL" id="AM490069">
    <property type="protein sequence ID" value="CAM32717.1"/>
    <property type="molecule type" value="Genomic_DNA"/>
</dbReference>
<dbReference type="EMBL" id="EF622510">
    <property type="protein sequence ID" value="ABR24117.1"/>
    <property type="molecule type" value="Genomic_DNA"/>
</dbReference>
<dbReference type="EMBL" id="EU410617">
    <property type="protein sequence ID" value="ABZ89500.1"/>
    <property type="molecule type" value="Genomic_DNA"/>
</dbReference>
<dbReference type="EMBL" id="GQ422610">
    <property type="protein sequence ID" value="ACV66342.1"/>
    <property type="molecule type" value="Genomic_DNA"/>
</dbReference>
<dbReference type="EMBL" id="FN550110">
    <property type="protein sequence ID" value="CBE66554.1"/>
    <property type="molecule type" value="Genomic_DNA"/>
</dbReference>
<dbReference type="EMBL" id="AF087939">
    <property type="protein sequence ID" value="AAD39697.1"/>
    <property type="molecule type" value="Genomic_DNA"/>
</dbReference>
<dbReference type="EMBL" id="AY094140">
    <property type="protein sequence ID" value="AAM14401.1"/>
    <property type="molecule type" value="Genomic_DNA"/>
</dbReference>
<dbReference type="EMBL" id="AJ001257">
    <property type="protein sequence ID" value="CAA04631.1"/>
    <property type="molecule type" value="Genomic_DNA"/>
</dbReference>
<dbReference type="EMBL" id="U39086">
    <property type="protein sequence ID" value="AAA93181.1"/>
    <property type="molecule type" value="Genomic_DNA"/>
</dbReference>
<dbReference type="EMBL" id="AJ965439">
    <property type="protein sequence ID" value="CAI84643.1"/>
    <property type="molecule type" value="Genomic_DNA"/>
</dbReference>
<dbReference type="EMBL" id="AF112463">
    <property type="protein sequence ID" value="AAD23990.1"/>
    <property type="molecule type" value="Genomic_DNA"/>
</dbReference>
<dbReference type="EMBL" id="AF112464">
    <property type="protein sequence ID" value="AAD23991.1"/>
    <property type="molecule type" value="Genomic_DNA"/>
</dbReference>
<dbReference type="EMBL" id="M94773">
    <property type="status" value="NOT_ANNOTATED_CDS"/>
    <property type="molecule type" value="Genomic_DNA"/>
</dbReference>
<dbReference type="EMBL" id="M65042">
    <property type="protein sequence ID" value="AAA36241.1"/>
    <property type="molecule type" value="Genomic_DNA"/>
</dbReference>
<dbReference type="EMBL" id="M25025">
    <property type="protein sequence ID" value="AAA59793.1"/>
    <property type="molecule type" value="mRNA"/>
</dbReference>
<dbReference type="PIR" id="A02234">
    <property type="entry name" value="HLHU1C"/>
</dbReference>
<dbReference type="PIR" id="A35055">
    <property type="entry name" value="A35055"/>
</dbReference>
<dbReference type="PIR" id="A94003">
    <property type="entry name" value="HLHUDB"/>
</dbReference>
<dbReference type="PIR" id="B32527">
    <property type="entry name" value="B32527"/>
</dbReference>
<dbReference type="PIR" id="B37044">
    <property type="entry name" value="B37044"/>
</dbReference>
<dbReference type="PIR" id="C24669">
    <property type="entry name" value="HLHU2C"/>
</dbReference>
<dbReference type="PIR" id="F30575">
    <property type="entry name" value="F30575"/>
</dbReference>
<dbReference type="PIR" id="I54480">
    <property type="entry name" value="I54480"/>
</dbReference>
<dbReference type="PIR" id="I68732">
    <property type="entry name" value="I68732"/>
</dbReference>
<dbReference type="PIR" id="I72482">
    <property type="entry name" value="I72482"/>
</dbReference>
<dbReference type="PIR" id="S46648">
    <property type="entry name" value="S46648"/>
</dbReference>
<dbReference type="RefSeq" id="NP_001230891.1">
    <property type="nucleotide sequence ID" value="NM_001243962.1"/>
</dbReference>
<dbReference type="RefSeq" id="NP_002114.3">
    <property type="nucleotide sequence ID" value="NM_002123.4"/>
</dbReference>
<dbReference type="PDB" id="1JK8">
    <property type="method" value="X-ray"/>
    <property type="resolution" value="2.40 A"/>
    <property type="chains" value="B=35-224"/>
</dbReference>
<dbReference type="PDB" id="1S9V">
    <property type="method" value="X-ray"/>
    <property type="resolution" value="2.22 A"/>
    <property type="chains" value="B/E=33-230"/>
</dbReference>
<dbReference type="PDB" id="1UVQ">
    <property type="method" value="X-ray"/>
    <property type="resolution" value="1.80 A"/>
    <property type="chains" value="B=35-230"/>
</dbReference>
<dbReference type="PDB" id="2NNA">
    <property type="method" value="X-ray"/>
    <property type="resolution" value="2.10 A"/>
    <property type="chains" value="B=33-224"/>
</dbReference>
<dbReference type="PDB" id="4GG6">
    <property type="method" value="X-ray"/>
    <property type="resolution" value="3.20 A"/>
    <property type="chains" value="B/D=33-224"/>
</dbReference>
<dbReference type="PDB" id="4OZF">
    <property type="method" value="X-ray"/>
    <property type="resolution" value="2.70 A"/>
    <property type="chains" value="B=33-224"/>
</dbReference>
<dbReference type="PDB" id="4OZG">
    <property type="method" value="X-ray"/>
    <property type="resolution" value="3.00 A"/>
    <property type="chains" value="B/D=33-224"/>
</dbReference>
<dbReference type="PDB" id="4OZH">
    <property type="method" value="X-ray"/>
    <property type="resolution" value="2.80 A"/>
    <property type="chains" value="B/D=33-224"/>
</dbReference>
<dbReference type="PDB" id="4OZI">
    <property type="method" value="X-ray"/>
    <property type="resolution" value="3.20 A"/>
    <property type="chains" value="B/D=33-224"/>
</dbReference>
<dbReference type="PDB" id="8VSP">
    <property type="method" value="EM"/>
    <property type="resolution" value="3.12 A"/>
    <property type="chains" value="B/E/H=1-261"/>
</dbReference>
<dbReference type="PDBsum" id="1JK8"/>
<dbReference type="PDBsum" id="1S9V"/>
<dbReference type="PDBsum" id="1UVQ"/>
<dbReference type="PDBsum" id="2NNA"/>
<dbReference type="PDBsum" id="4GG6"/>
<dbReference type="PDBsum" id="4OZF"/>
<dbReference type="PDBsum" id="4OZG"/>
<dbReference type="PDBsum" id="4OZH"/>
<dbReference type="PDBsum" id="4OZI"/>
<dbReference type="PDBsum" id="8VSP"/>
<dbReference type="EMDB" id="EMD-43501"/>
<dbReference type="SMR" id="P01920"/>
<dbReference type="BioGRID" id="109364">
    <property type="interactions" value="120"/>
</dbReference>
<dbReference type="FunCoup" id="P01920">
    <property type="interactions" value="459"/>
</dbReference>
<dbReference type="IntAct" id="P01920">
    <property type="interactions" value="69"/>
</dbReference>
<dbReference type="MINT" id="P01920"/>
<dbReference type="STRING" id="9606.ENSP00000364080"/>
<dbReference type="TCDB" id="9.A.75.1.1">
    <property type="family name" value="the mhc ii receptor (mhc2r) family"/>
</dbReference>
<dbReference type="GlyCosmos" id="P01920">
    <property type="glycosylation" value="1 site, No reported glycans"/>
</dbReference>
<dbReference type="GlyGen" id="P01920">
    <property type="glycosylation" value="2 sites"/>
</dbReference>
<dbReference type="iPTMnet" id="P01920"/>
<dbReference type="PhosphoSitePlus" id="P01920"/>
<dbReference type="BioMuta" id="HLA-DQB1"/>
<dbReference type="DMDM" id="290457643"/>
<dbReference type="jPOST" id="P01920"/>
<dbReference type="MassIVE" id="P01920"/>
<dbReference type="PaxDb" id="9606-ENSP00000364080"/>
<dbReference type="ProteomicsDB" id="51513"/>
<dbReference type="ABCD" id="P01920">
    <property type="antibodies" value="26 sequenced antibodies"/>
</dbReference>
<dbReference type="CPTC" id="P01920">
    <property type="antibodies" value="1 antibody"/>
</dbReference>
<dbReference type="DNASU" id="3119"/>
<dbReference type="Ensembl" id="ENST00000399088.8">
    <property type="protein sequence ID" value="ENSP00000382038.4"/>
    <property type="gene ID" value="ENSG00000231286.7"/>
</dbReference>
<dbReference type="Ensembl" id="ENST00000413089.1">
    <property type="protein sequence ID" value="ENSP00000396539.1"/>
    <property type="gene ID" value="ENSG00000231286.7"/>
</dbReference>
<dbReference type="Ensembl" id="ENST00000416192.6">
    <property type="protein sequence ID" value="ENSP00000410107.2"/>
    <property type="gene ID" value="ENSG00000233209.6"/>
</dbReference>
<dbReference type="Ensembl" id="ENST00000419914.6">
    <property type="protein sequence ID" value="ENSP00000402865.2"/>
    <property type="gene ID" value="ENSG00000225824.8"/>
</dbReference>
<dbReference type="Ensembl" id="ENST00000422950.1">
    <property type="protein sequence ID" value="ENSP00000414079.1"/>
    <property type="gene ID" value="ENSG00000233209.6"/>
</dbReference>
<dbReference type="Ensembl" id="ENST00000424806.1">
    <property type="protein sequence ID" value="ENSP00000410330.1"/>
    <property type="gene ID" value="ENSG00000225824.8"/>
</dbReference>
<dbReference type="GeneID" id="3119"/>
<dbReference type="KEGG" id="hsa:3119"/>
<dbReference type="UCSC" id="uc011hep.3">
    <property type="organism name" value="human"/>
</dbReference>
<dbReference type="AGR" id="HGNC:4944"/>
<dbReference type="CTD" id="3119"/>
<dbReference type="DisGeNET" id="3119"/>
<dbReference type="GeneCards" id="HLA-DQB1"/>
<dbReference type="GeneReviews" id="HLA-DQB1"/>
<dbReference type="HGNC" id="HGNC:4944">
    <property type="gene designation" value="HLA-DQB1"/>
</dbReference>
<dbReference type="MalaCards" id="HLA-DQB1"/>
<dbReference type="MIM" id="604305">
    <property type="type" value="gene"/>
</dbReference>
<dbReference type="neXtProt" id="NX_P01920"/>
<dbReference type="Orphanet" id="703">
    <property type="disease" value="Bullous pemphigoid"/>
</dbReference>
<dbReference type="Orphanet" id="930">
    <property type="disease" value="Idiopathic achalasia"/>
</dbReference>
<dbReference type="Orphanet" id="2073">
    <property type="disease" value="Narcolepsy type 1"/>
</dbReference>
<dbReference type="Orphanet" id="83465">
    <property type="disease" value="Narcolepsy type 2"/>
</dbReference>
<dbReference type="Orphanet" id="477738">
    <property type="disease" value="Pediatric multiple sclerosis"/>
</dbReference>
<dbReference type="PharmGKB" id="PA35068"/>
<dbReference type="eggNOG" id="ENOG502RYBQ">
    <property type="taxonomic scope" value="Eukaryota"/>
</dbReference>
<dbReference type="InParanoid" id="P01920"/>
<dbReference type="OrthoDB" id="10043043at2759"/>
<dbReference type="PAN-GO" id="P01920">
    <property type="GO annotations" value="6 GO annotations based on evolutionary models"/>
</dbReference>
<dbReference type="PhylomeDB" id="P01920"/>
<dbReference type="PathwayCommons" id="P01920"/>
<dbReference type="Reactome" id="R-HSA-202424">
    <property type="pathway name" value="Downstream TCR signaling"/>
</dbReference>
<dbReference type="Reactome" id="R-HSA-202427">
    <property type="pathway name" value="Phosphorylation of CD3 and TCR zeta chains"/>
</dbReference>
<dbReference type="Reactome" id="R-HSA-202430">
    <property type="pathway name" value="Translocation of ZAP-70 to Immunological synapse"/>
</dbReference>
<dbReference type="Reactome" id="R-HSA-202433">
    <property type="pathway name" value="Generation of second messenger molecules"/>
</dbReference>
<dbReference type="Reactome" id="R-HSA-2132295">
    <property type="pathway name" value="MHC class II antigen presentation"/>
</dbReference>
<dbReference type="Reactome" id="R-HSA-389948">
    <property type="pathway name" value="Co-inhibition by PD-1"/>
</dbReference>
<dbReference type="Reactome" id="R-HSA-877300">
    <property type="pathway name" value="Interferon gamma signaling"/>
</dbReference>
<dbReference type="SignaLink" id="P01920"/>
<dbReference type="SIGNOR" id="P01920"/>
<dbReference type="BioGRID-ORCS" id="3119">
    <property type="hits" value="11 hits in 1060 CRISPR screens"/>
</dbReference>
<dbReference type="ChiTaRS" id="HLA-DQB1">
    <property type="organism name" value="human"/>
</dbReference>
<dbReference type="EvolutionaryTrace" id="P01920"/>
<dbReference type="GeneWiki" id="HLA-DQB1"/>
<dbReference type="GenomeRNAi" id="3119"/>
<dbReference type="Pharos" id="P01920">
    <property type="development level" value="Tbio"/>
</dbReference>
<dbReference type="PRO" id="PR:P01920"/>
<dbReference type="Proteomes" id="UP000005640">
    <property type="component" value="Unplaced"/>
</dbReference>
<dbReference type="RNAct" id="P01920">
    <property type="molecule type" value="protein"/>
</dbReference>
<dbReference type="Bgee" id="ENSG00000231286">
    <property type="expression patterns" value="Expressed in spleen and 10 other cell types or tissues"/>
</dbReference>
<dbReference type="GO" id="GO:0030669">
    <property type="term" value="C:clathrin-coated endocytic vesicle membrane"/>
    <property type="evidence" value="ECO:0000304"/>
    <property type="project" value="Reactome"/>
</dbReference>
<dbReference type="GO" id="GO:0030666">
    <property type="term" value="C:endocytic vesicle membrane"/>
    <property type="evidence" value="ECO:0000304"/>
    <property type="project" value="Reactome"/>
</dbReference>
<dbReference type="GO" id="GO:0012507">
    <property type="term" value="C:ER to Golgi transport vesicle membrane"/>
    <property type="evidence" value="ECO:0000304"/>
    <property type="project" value="Reactome"/>
</dbReference>
<dbReference type="GO" id="GO:0000139">
    <property type="term" value="C:Golgi membrane"/>
    <property type="evidence" value="ECO:0000304"/>
    <property type="project" value="Reactome"/>
</dbReference>
<dbReference type="GO" id="GO:0031902">
    <property type="term" value="C:late endosome membrane"/>
    <property type="evidence" value="ECO:0000318"/>
    <property type="project" value="GO_Central"/>
</dbReference>
<dbReference type="GO" id="GO:0098553">
    <property type="term" value="C:lumenal side of endoplasmic reticulum membrane"/>
    <property type="evidence" value="ECO:0000304"/>
    <property type="project" value="Reactome"/>
</dbReference>
<dbReference type="GO" id="GO:0005765">
    <property type="term" value="C:lysosomal membrane"/>
    <property type="evidence" value="ECO:0000318"/>
    <property type="project" value="GO_Central"/>
</dbReference>
<dbReference type="GO" id="GO:0016020">
    <property type="term" value="C:membrane"/>
    <property type="evidence" value="ECO:0007005"/>
    <property type="project" value="UniProtKB"/>
</dbReference>
<dbReference type="GO" id="GO:0042613">
    <property type="term" value="C:MHC class II protein complex"/>
    <property type="evidence" value="ECO:0000250"/>
    <property type="project" value="CAFA"/>
</dbReference>
<dbReference type="GO" id="GO:0005886">
    <property type="term" value="C:plasma membrane"/>
    <property type="evidence" value="ECO:0000304"/>
    <property type="project" value="Reactome"/>
</dbReference>
<dbReference type="GO" id="GO:0032588">
    <property type="term" value="C:trans-Golgi network membrane"/>
    <property type="evidence" value="ECO:0000304"/>
    <property type="project" value="Reactome"/>
</dbReference>
<dbReference type="GO" id="GO:0030658">
    <property type="term" value="C:transport vesicle membrane"/>
    <property type="evidence" value="ECO:0000304"/>
    <property type="project" value="Reactome"/>
</dbReference>
<dbReference type="GO" id="GO:0023026">
    <property type="term" value="F:MHC class II protein complex binding"/>
    <property type="evidence" value="ECO:0000318"/>
    <property type="project" value="GO_Central"/>
</dbReference>
<dbReference type="GO" id="GO:0032395">
    <property type="term" value="F:MHC class II receptor activity"/>
    <property type="evidence" value="ECO:0000303"/>
    <property type="project" value="UniProtKB"/>
</dbReference>
<dbReference type="GO" id="GO:0042605">
    <property type="term" value="F:peptide antigen binding"/>
    <property type="evidence" value="ECO:0000250"/>
    <property type="project" value="CAFA"/>
</dbReference>
<dbReference type="GO" id="GO:0002250">
    <property type="term" value="P:adaptive immune response"/>
    <property type="evidence" value="ECO:0007669"/>
    <property type="project" value="UniProtKB-KW"/>
</dbReference>
<dbReference type="GO" id="GO:0019886">
    <property type="term" value="P:antigen processing and presentation of exogenous peptide antigen via MHC class II"/>
    <property type="evidence" value="ECO:0000314"/>
    <property type="project" value="UniProtKB"/>
</dbReference>
<dbReference type="GO" id="GO:0006959">
    <property type="term" value="P:humoral immune response"/>
    <property type="evidence" value="ECO:0000315"/>
    <property type="project" value="UniProtKB"/>
</dbReference>
<dbReference type="GO" id="GO:0006955">
    <property type="term" value="P:immune response"/>
    <property type="evidence" value="ECO:0000303"/>
    <property type="project" value="UniProtKB"/>
</dbReference>
<dbReference type="GO" id="GO:0002503">
    <property type="term" value="P:peptide antigen assembly with MHC class II protein complex"/>
    <property type="evidence" value="ECO:0000318"/>
    <property type="project" value="GO_Central"/>
</dbReference>
<dbReference type="GO" id="GO:0050778">
    <property type="term" value="P:positive regulation of immune response"/>
    <property type="evidence" value="ECO:0000318"/>
    <property type="project" value="GO_Central"/>
</dbReference>
<dbReference type="GO" id="GO:0050870">
    <property type="term" value="P:positive regulation of T cell activation"/>
    <property type="evidence" value="ECO:0000318"/>
    <property type="project" value="GO_Central"/>
</dbReference>
<dbReference type="GO" id="GO:0050852">
    <property type="term" value="P:T cell receptor signaling pathway"/>
    <property type="evidence" value="ECO:0000314"/>
    <property type="project" value="UniProtKB"/>
</dbReference>
<dbReference type="CDD" id="cd21001">
    <property type="entry name" value="IgC1_MHC_II_beta_HLA-DQ_I-A"/>
    <property type="match status" value="1"/>
</dbReference>
<dbReference type="FunFam" id="2.60.40.10:FF:000116">
    <property type="entry name" value="HLA class II histocompatibility antigen, DRB1-1 beta chain"/>
    <property type="match status" value="1"/>
</dbReference>
<dbReference type="FunFam" id="3.10.320.10:FF:000001">
    <property type="entry name" value="HLA class II histocompatibility antigen, DRB1-1 beta chain"/>
    <property type="match status" value="1"/>
</dbReference>
<dbReference type="Gene3D" id="3.10.320.10">
    <property type="entry name" value="Class II Histocompatibility Antigen, M Beta Chain, Chain B, domain 1"/>
    <property type="match status" value="1"/>
</dbReference>
<dbReference type="Gene3D" id="2.60.40.10">
    <property type="entry name" value="Immunoglobulins"/>
    <property type="match status" value="1"/>
</dbReference>
<dbReference type="InterPro" id="IPR007110">
    <property type="entry name" value="Ig-like_dom"/>
</dbReference>
<dbReference type="InterPro" id="IPR036179">
    <property type="entry name" value="Ig-like_dom_sf"/>
</dbReference>
<dbReference type="InterPro" id="IPR013783">
    <property type="entry name" value="Ig-like_fold"/>
</dbReference>
<dbReference type="InterPro" id="IPR003006">
    <property type="entry name" value="Ig/MHC_CS"/>
</dbReference>
<dbReference type="InterPro" id="IPR003597">
    <property type="entry name" value="Ig_C1-set"/>
</dbReference>
<dbReference type="InterPro" id="IPR050160">
    <property type="entry name" value="MHC/Immunoglobulin"/>
</dbReference>
<dbReference type="InterPro" id="IPR011162">
    <property type="entry name" value="MHC_I/II-like_Ag-recog"/>
</dbReference>
<dbReference type="InterPro" id="IPR014745">
    <property type="entry name" value="MHC_II_a/b_N"/>
</dbReference>
<dbReference type="InterPro" id="IPR000353">
    <property type="entry name" value="MHC_II_b_N"/>
</dbReference>
<dbReference type="PANTHER" id="PTHR19944:SF101">
    <property type="entry name" value="HLA CLASS II HISTOCOMPATIBILITY ANTIGEN, DQ BETA 1 CHAIN"/>
    <property type="match status" value="1"/>
</dbReference>
<dbReference type="PANTHER" id="PTHR19944">
    <property type="entry name" value="MHC CLASS II-RELATED"/>
    <property type="match status" value="1"/>
</dbReference>
<dbReference type="Pfam" id="PF07654">
    <property type="entry name" value="C1-set"/>
    <property type="match status" value="1"/>
</dbReference>
<dbReference type="Pfam" id="PF00969">
    <property type="entry name" value="MHC_II_beta"/>
    <property type="match status" value="1"/>
</dbReference>
<dbReference type="SMART" id="SM00407">
    <property type="entry name" value="IGc1"/>
    <property type="match status" value="1"/>
</dbReference>
<dbReference type="SMART" id="SM00921">
    <property type="entry name" value="MHC_II_beta"/>
    <property type="match status" value="1"/>
</dbReference>
<dbReference type="SUPFAM" id="SSF48726">
    <property type="entry name" value="Immunoglobulin"/>
    <property type="match status" value="1"/>
</dbReference>
<dbReference type="SUPFAM" id="SSF54452">
    <property type="entry name" value="MHC antigen-recognition domain"/>
    <property type="match status" value="1"/>
</dbReference>
<dbReference type="PROSITE" id="PS50835">
    <property type="entry name" value="IG_LIKE"/>
    <property type="match status" value="1"/>
</dbReference>
<dbReference type="PROSITE" id="PS00290">
    <property type="entry name" value="IG_MHC"/>
    <property type="match status" value="1"/>
</dbReference>
<feature type="signal peptide" evidence="7">
    <location>
        <begin position="1"/>
        <end position="32"/>
    </location>
</feature>
<feature type="chain" id="PRO_0000018989" description="HLA class II histocompatibility antigen, DQ beta 1 chain">
    <location>
        <begin position="33"/>
        <end position="261"/>
    </location>
</feature>
<feature type="topological domain" description="Extracellular" evidence="1">
    <location>
        <begin position="33"/>
        <end position="230"/>
    </location>
</feature>
<feature type="transmembrane region" description="Helical" evidence="1">
    <location>
        <begin position="231"/>
        <end position="251"/>
    </location>
</feature>
<feature type="topological domain" description="Cytoplasmic" evidence="1">
    <location>
        <begin position="252"/>
        <end position="261"/>
    </location>
</feature>
<feature type="domain" description="Ig-like C1-type">
    <location>
        <begin position="129"/>
        <end position="217"/>
    </location>
</feature>
<feature type="region of interest" description="Beta-1">
    <location>
        <begin position="33"/>
        <end position="126"/>
    </location>
</feature>
<feature type="region of interest" description="Beta-2">
    <location>
        <begin position="127"/>
        <end position="220"/>
    </location>
</feature>
<feature type="region of interest" description="Connecting peptide">
    <location>
        <begin position="221"/>
        <end position="230"/>
    </location>
</feature>
<feature type="glycosylation site" description="N-linked (GlcNAc...) asparagine" evidence="1">
    <location>
        <position position="51"/>
    </location>
</feature>
<feature type="disulfide bond">
    <location>
        <begin position="47"/>
        <end position="111"/>
    </location>
</feature>
<feature type="disulfide bond">
    <location>
        <begin position="149"/>
        <end position="205"/>
    </location>
</feature>
<feature type="sequence variant" id="VAR_056570" description="In allele DQB1*05:01 and allele DQB1*05:02; dbSNP:rs1049056.">
    <original>A</original>
    <variation>S</variation>
    <location>
        <position position="6"/>
    </location>
</feature>
<feature type="sequence variant" id="VAR_062679" description="In allele DQB1*05:01, allele DQB1*05:02, allele DQB1*06:02 and allele DQB1*06:12; dbSNP:rs1049057.">
    <original>G</original>
    <variation>D</variation>
    <location>
        <position position="12"/>
    </location>
</feature>
<feature type="sequence variant" id="VAR_062680" description="In allele DQB1*03:02, allele DQB1*03:03, allele DQB1*04:01, allele DQB1*05:01, allele DQB1*05:02, allele DQB1*06:02 and allele DQB1*06:12; dbSNP:rs3189152." evidence="6">
    <original>A</original>
    <variation>V</variation>
    <location>
        <position position="15"/>
    </location>
</feature>
<feature type="sequence variant" id="VAR_062681" description="In allele DQB1*02:01 and allele DQB1*02:02; dbSNP:rs3891176.">
    <original>A</original>
    <variation>S</variation>
    <location>
        <position position="23"/>
    </location>
</feature>
<feature type="sequence variant" id="VAR_062682" description="In allele DQB1*05:01 and allele DQB1*05:02; dbSNP:rs1049059.">
    <original>M</original>
    <variation>I</variation>
    <location>
        <position position="24"/>
    </location>
</feature>
<feature type="sequence variant" id="VAR_062683" description="In allele DQB1*04:01; dbSNP:rs1049060.">
    <original>T</original>
    <variation>A</variation>
    <location>
        <position position="27"/>
    </location>
</feature>
<feature type="sequence variant" id="VAR_062684" description="In allele DQB1*05:01, allele DQB1*05:02, allele DQB1*06:02 and allele DQB1*06:12; dbSNP:rs1049060.">
    <original>T</original>
    <variation>S</variation>
    <location>
        <position position="27"/>
    </location>
</feature>
<feature type="sequence variant" id="VAR_062685" description="In allele DQB1*06:02 and allele DQB1*06:12; dbSNP:rs1049062.">
    <original>P</original>
    <variation>L</variation>
    <location>
        <position position="28"/>
    </location>
</feature>
<feature type="sequence variant" id="VAR_062686" description="In allele DQB1*05:01 and allele DQB1*05:02; dbSNP:rs1049061." evidence="6">
    <original>P</original>
    <variation>S</variation>
    <location>
        <position position="28"/>
    </location>
</feature>
<feature type="sequence variant" id="VAR_062687" description="In allele DQB1*05:01, allele DQB1*05:02, allele DQB1*06:02 and allele DQB1*06:12; dbSNP:rs1130366.">
    <original>V</original>
    <variation>L</variation>
    <location>
        <position position="29"/>
    </location>
</feature>
<feature type="sequence variant" id="VAR_062688" description="In allele DQB1*06:01; dbSNP:rs12722106.">
    <original>S</original>
    <variation>P</variation>
    <location>
        <position position="35"/>
    </location>
</feature>
<feature type="sequence variant" id="VAR_062689" description="In allele DQB1*04:01, allele DQB1*04:02, allele DQB1*04:03, allele DQB1*06:02, allele DQB1*06:10, allele DQB1*06:13, allele DQB1*06:14, allele DQB1*06:15, allele DQB1*06:16, allele DQB1*06:19, allele DQB1*06:20, allele DQB1*06:22, allele DQB1*06:23, allele DQB1*06:24, allele DQB1*06:29, allele DQB1*06:33 and allele DQB1*06:37; dbSNP:rs9274407.">
    <original>Y</original>
    <variation>F</variation>
    <location>
        <position position="41"/>
    </location>
</feature>
<feature type="sequence variant" id="VAR_062690" description="In allele DQB1*06:01 and allele DQB1*06:35; requires 2 nucleotide substitutions.">
    <original>Y</original>
    <variation>L</variation>
    <location>
        <position position="41"/>
    </location>
</feature>
<feature type="sequence variant" id="VAR_062691" description="In allele DQB1*06:33; dbSNP:rs56173496.">
    <original>F</original>
    <variation>L</variation>
    <location>
        <position position="43"/>
    </location>
</feature>
<feature type="sequence variant" id="VAR_061472" description="In allele DQB1*02:01, allele DQB1*02:02, allele DQB1*02:03, allele DQB1*02:04, allele DQB1*02:05, allele DQB1*03:02, allele DQB1*03:03, allele DQB1*03:05, allele DQB1*03:06, allele DQB1*03:07, allele DQB1*03:08, allele DQB1*03:11, allele DQB1*03:15, allele DQB1*03:17, allele DQB1*03:18, allele DQB1*03:20, allele DQB1*03:23, allele DQB1*03:25, allele DQB1*03:26, allele DQB1*04:01, allele DQB1*04:02, allele DQB1*04:03, allele DQB1*05:01, allele DQB1*05:02, allele DQB1*05:03, allele DQB1*05:04, allele DQB1*05:05, allele DQB1*06:02, allele DQB1*06:03, allele DQB1*06:04, allele DQB1*06:05, allele DQB1*06:07, allele DQB1*06:08, allele DQB1*06:09, allele DQB1*06:10, allele DQB1*06:11, allele DQB1*06:12, allele DQB1*06:13, allele DQB1*06:14, allele DQB1*06:15, allele DQB1*06:16, allele DQB1*06:17, allele DQB1*06:18, allele DQB1*06:19, allele DQB1*06:20, allele DQB1*06:21, allele DQB1*06:22, allele DQB1*06:23, allele DQB1*06:24, allele DQB1*06:25, allele DQB1*06:27, allele DQB1*06:28, allele DQB1*06:29, allele DQB1*06:30, allele DQB1*06:31, allele DQB1*06:32, allele DQB1*06:33, allele DQB1*06:34, allele DQB1*06:36, allele DQB1*06:37, allele DQB1*06:38 and allele DQB1*06:39; dbSNP:rs1130375." evidence="6">
    <original>A</original>
    <variation>G</variation>
    <location>
        <position position="45"/>
    </location>
</feature>
<feature type="sequence variant" id="VAR_061473" description="In allele DQB1*03:11, allele DQB1*03:26, allele DQB1*05:01, allele DQB1*05:02, allele DQB1*05:03, allele DQB1*05:04, allele DQB1*05:05, allele DQB1*06:05, allele DQB1*06:20 and allele DQB1*06:31; dbSNP:rs1130368.">
    <original>M</original>
    <variation>L</variation>
    <location>
        <position position="46"/>
    </location>
</feature>
<feature type="sequence variant" id="VAR_062692" description="In allele DQB1*04:01; dbSNP:rs41540813.">
    <original>R</original>
    <variation>L</variation>
    <location>
        <position position="55"/>
    </location>
</feature>
<feature type="sequence variant" id="VAR_062693" description="In allele DQB1*03:05, allele DQB1*03:17, allele DQB1*04:01, allele DQB1*04:02, allele DQB1*05:01, allele DQB1*05:02, allele DQB1*05:03, allele DQB1*05:04, allele DQB1*05:05 and allele DQB1*06:23; requires 2 nucleotide substitutions.">
    <original>Y</original>
    <variation>G</variation>
    <location>
        <position position="58"/>
    </location>
</feature>
<feature type="sequence variant" id="VAR_062694" description="In allele DQB1*02:01, allele DQB1*02:02, allele DQB1*02:03, allele DQB1*02:04, allele DQB1*02:05, allele DQB1*03:02, allele DQB1*03:03, allele DQB1*03:06, allele DQB1*03:07, allele DQB1*03:08, allele DQB1*03:11, allele DQB1*03:12, allele DQB1*03:15, allele DQB1*03:18, allele DQB1*03:20, allele DQB1*03:23, allele DQB1*03:25, allele DQB1*03:26, allele DQB1*04:03, allele DQB1*06:02, allele DQB1*06:03, allele DQB1*06:04, allele DQB1*06:05, allele DQB1*06:06, allele DQB1*06:07, allele DQB1*06:08, allele DQB1*06:09, allele DQB1*06:10, allele DQB1*06:11, allele DQB1*06:12, allele DQB1*06:13, allele DQB1*06:14, allele DQB1*06:15, allele DQB1*06:16, allele DQB1*06:17, allele DQB1*06:18, allele DQB1*06:19, allele DQB1*06:20, allele DQB1*06:21, allele DQB1*06:22, allele DQB1*06:24, allele DQB1*06:25, allele DQB1*06:27, allele DQB1*06:28, allele DQB1*06:29, allele DQB1*06:30, allele DQB1*06:31, allele DQB1*06:32, allele DQB1*06:33, allele DQB1*06:34, allele DQB1*06:36, allele DQB1*06:37, allele DQB1*06:38 and allele DQB1*06:39; requires 2 nucleotide substitutions; dbSNP:rs766817072." evidence="6">
    <original>Y</original>
    <variation>L</variation>
    <location>
        <position position="58"/>
    </location>
</feature>
<feature type="sequence variant" id="VAR_062695" description="In allele DQB1*03:18; dbSNP:rs41563539.">
    <original>V</original>
    <variation>L</variation>
    <location>
        <position position="59"/>
    </location>
</feature>
<feature type="sequence variant" id="VAR_062696" description="In allele DQB1*02:01, allele DQB1*02:02, allele DQB1*02:03, allele DQB1*02:04 and allele DQB1*02:05; dbSNP:rs9274405.">
    <original>T</original>
    <variation>S</variation>
    <location>
        <position position="60"/>
    </location>
</feature>
<feature type="sequence variant" id="VAR_062697" description="In allele DQB1*05:01, allele DQB1*05:02, allele DQB1*05:03, allele DQB1*05:05, allele DQB1*06:03, allele DQB1*06:04, allele DQB1*06:07, allele DQB1*06:08, allele DQB1*06:14, allele DQB1*06:17, allele DQB1*06:21, allele DQB1*06:25, allele DQB1*06:27, allele DQB1*06:28, allele DQB1*06:30, allele DQB1*06:31, allele DQB1*06:32, allele DQB1*06:34, allele DQB1*06:36, allele DQB1*06:38 and allele DQB1*06:39; dbSNP:rs281862065.">
    <original>Y</original>
    <variation>H</variation>
    <location>
        <position position="62"/>
    </location>
</feature>
<feature type="sequence variant" id="VAR_062698" description="In allele DQB1*02:01, allele DQB1*02:02, allele DQB1*02:03, allele DQB1*02:04 and allele DQB1*02:05.">
    <original>Y</original>
    <variation>S</variation>
    <location>
        <position position="62"/>
    </location>
</feature>
<feature type="sequence variant" id="VAR_062699" description="In allele DQB1*06:01 and allele DQB1*06:35; dbSNP:rs281874782.">
    <original>Y</original>
    <variation>D</variation>
    <location>
        <position position="69"/>
    </location>
</feature>
<feature type="sequence variant" id="VAR_062700" description="In allele DQB1*02:01, allele DQB1*02:02, allele DQB1*02:03, allele DQB1*02:04 and allele DQB1*02:05; requires 2 nucleotide substitutions.">
    <original>Y</original>
    <variation>I</variation>
    <location>
        <position position="69"/>
    </location>
</feature>
<feature type="sequence variant" id="VAR_062701" description="In allele DQB1*03:20; dbSNP:rs45519640.">
    <original>A</original>
    <variation>T</variation>
    <location>
        <position position="70"/>
    </location>
</feature>
<feature type="sequence variant" id="VAR_062702" description="In allele DQB1*02:01, allele DQB1*02:02, allele DQB1*02:03, allele DQB1*02:04, allele DQB1*02:05, allele DQB1*05:01, allele DQB1*05:02, allele DQB1*05:03, allele DQB1*05:04, allele DQB1*06:01, allele DQB1*06:28 and allele DQB1*06:35; dbSNP:rs1063318.">
    <original>A</original>
    <variation>V</variation>
    <location>
        <position position="70"/>
    </location>
</feature>
<feature type="sequence variant" id="VAR_062703" description="In allele DQB1*02:01, allele DQB1*02:02, allele DQB1*02:03, allele DQB1*02:04, allele DQB1*02:05, allele DQB1*03:02, allele DQB1*03:03, allele DQB1*03:05, allele DQB1*03:06, allele DQB1*03:07, allele DQB1*03:08, allele DQB1*03:10, allele DQB1*03:11, allele DQB1*03:12, allele DQB1*03:14, allele DQB1*03:15, allele DQB1*03:17, allele DQB1*03:18, allele DQB1*03:20, allele DQB1*03:23, allele DQB1*03:25, allele DQB1*03:26, allele DQB1*04:01, allele DQB1*04:02, allele DQB1*04:03, allele DQB1*05:01, allele DQB1*05:02, allele DQB1*05:03, allele DQB1*05:04, allele DQB1*05:05, allele DQB1*06:01, allele DQB1*06:02, allele DQB1*06:03, allele DQB1*06:04, allele DQB1*06:05, allele DQB1*06:06, allele DQB1*06:07, allele DQB1*06:08, allele DQB1*06:09, allele DQB1*06:10, allele DQB1*06:11, allele DQB1*06:12, allele DQB1*06:13, allele DQB1*06:14, allele DQB1*06:15, allele DQB1*06:16, allele DQB1*06:17, allele DQB1*06:18, allele DQB1*06:19, allele DQB1*06:20, allele DQB1*06:21, allele DQB1*06:22, allele DQB1*06:23, allele DQB1*06:24, allele DQB1*06:25, allele DQB1*06:27, allele DQB1*06:28, allele DQB1*06:29, allele DQB1*06:30, allele DQB1*06:31, allele DQB1*06:32, allele DQB1*06:33, allele DQB1*06:34, allele DQB1*06:36, allele DQB1*06:37, allele DQB1*06:38 and allele DQB1*06:39; dbSNP:rs1049083." evidence="6">
    <original>E</original>
    <variation>G</variation>
    <location>
        <position position="77"/>
    </location>
</feature>
<feature type="sequence variant" id="VAR_062704" description="In allele DQB1*02:01, allele DQB1*02:02, allele DQB1*02:03, allele DQB1*02:04 and allele DQB1*02:05; dbSNP:rs9274398.">
    <original>V</original>
    <variation>E</variation>
    <location>
        <position position="78"/>
    </location>
</feature>
<feature type="sequence variant" id="VAR_062705" description="In allele DQB1*02:01, allele DQB1*02:02, allele DQB1*02:03, allele DQB1*02:04 and allele DQB1*02:05; dbSNP:rs9274397.">
    <original>Y</original>
    <variation>F</variation>
    <location>
        <position position="79"/>
    </location>
</feature>
<feature type="sequence variant" id="VAR_062706" description="In allele DQB1*03:07; dbSNP:rs41558214.">
    <original>A</original>
    <variation>V</variation>
    <location>
        <position position="81"/>
    </location>
</feature>
<feature type="sequence variant" id="VAR_062707" description="In allele DQB1*02:01, allele DQB1*02:02, allele DQB1*02:03, allele DQB1*02:04 and allele DQB1*02:05; dbSNP:rs9274395.">
    <original>P</original>
    <variation>L</variation>
    <location>
        <position position="84"/>
    </location>
</feature>
<feature type="sequence variant" id="VAR_062708" description="In allele DQB1*03:23, allele DQB1*05:01, allele DQB1*05:02, allele DQB1*05:03, allele DQB1*05:04, allele DQB1*05:05, allele DQB1*06:01, allele DQB1*06:02, allele DQB1*06:03, allele DQB1*06:04, allele DQB1*06:05, allele DQB1*06:06, allele DQB1*06:07, allele DQB1*06:08, allele DQB1*06:09, allele DQB1*06:10, allele DQB1*06:11, allele DQB1*06:12, allele DQB1*06:13, allele DQB1*06:14, allele DQB1*06:15, allele DQB1*06:16, allele DQB1*06:17, allele DQB1*06:18, allele DQB1*06:20, allele DQB1*06:22, allele DQB1*06:21, allele DQB1*06:23, allele DQB1*06:24, allele DQB1*06:25, allele DQB1*06:27, allele DQB1*06:28, allele DQB1*06:29, allele DQB1*06:30, allele DQB1*06:31, allele DQB1*06:32, allele DQB1*06:33, allele DQB1*06:34, allele DQB1*06:36, allele DQB1*06:37, allele DQB1*06:38 and allele DQB1*06:39; dbSNP:rs1140313.">
    <original>L</original>
    <variation>Q</variation>
    <location>
        <position position="85"/>
    </location>
</feature>
<feature type="sequence variant" id="VAR_062709" description="In allele DQB1*02:01, allele DQB1*02:02, allele DQB1*02:03, allele DQB1*02:04 and allele DQB1*02:05; dbSNP:rs1130380.">
    <original>P</original>
    <variation>L</variation>
    <location>
        <position position="87"/>
    </location>
</feature>
<feature type="sequence variant" id="VAR_062710" description="In allele DQB1*03:16; dbSNP:rs1130380.">
    <original>P</original>
    <variation>Q</variation>
    <location>
        <position position="87"/>
    </location>
</feature>
<feature type="sequence variant" id="VAR_062711" description="In allele DQB1*03:23, allele DQB1*03:25, allele DQB1*04:01, allele DQB1*04:02, allele DQB1*04:03, allele DQB1*05:01, allele DQB1*05:02, allele DQB1*05:03, allele DQB1*05:04, allele DQB1*05:05, allele DQB1*06:01, allele DQB1*06:02, allele DQB1*06:03, allele DQB1*06:04, allele DQB1*06:05, allele DQB1*06:06, allele DQB1*06:07, allele DQB1*06:08, allele DQB1*06:09, allele DQB1*06:10, allele DQB1*06:11, allele DQB1*06:12, allele DQB1*06:13, allele DQB1*06:14, allele DQB1*06:15, allele DQB1*06:16, allele DQB1*06:17, allele DQB1*06:18, allele DQB1*06:19, allele DQB1*06:20, allele DQB1*06:21, allele DQB1*06:22, allele DQB1*06:23, allele DQB1*06:24, allele DQB1*06:25, allele DQB1*06:27, allele DQB1*06:28, allele DQB1*06:30, allele DQB1*06:31, allele DQB1*06:32, allele DQB1*06:33, allele DQB1*06:34, allele DQB1*06:35, allele DQB1*06:36, allele DQB1*06:37, allele DQB1*06:38 and allele DQB1*06:39; dbSNP:rs1130380.">
    <original>P</original>
    <variation>R</variation>
    <location>
        <position position="87"/>
    </location>
</feature>
<feature type="sequence variant" id="VAR_062712" description="In allele DQB1*03:25, allele DQB1*04:01, allele DQB1*04:02 and allele DQB1*04:03; dbSNP:rs1130381.">
    <original>P</original>
    <variation>L</variation>
    <location>
        <position position="88"/>
    </location>
</feature>
<feature type="sequence variant" id="VAR_062713" description="In allele DQB1*02:01, allele DQB1*02:02, allele DQB1*02:04, allele DQB1*02:05, allele DQB1*03:02, allele DQB1*03:04, allele DQB1*03:05, allele DQB1*03:07, allele DQB1*03:08, allele DQB1*03:11, allele DQB1*03:14, allele DQB1*03:18 and allele DQB1*06:29; dbSNP:rs1071637.">
    <original>D</original>
    <variation>A</variation>
    <location>
        <position position="89"/>
    </location>
</feature>
<feature type="sequence variant" id="VAR_062714" description="In allele DQB1*05:02, allele DQB1*05:04, allele DQB1*05:05, allele DQB1*06:10 and allele DQB1*06:25; requires 2 nucleotide substitutions.">
    <original>D</original>
    <variation>S</variation>
    <location>
        <position position="89"/>
    </location>
</feature>
<feature type="sequence variant" id="VAR_062715" description="In allele DQB1*05:01, allele DQB1*06:04, allele DQB1*06:05, allele DQB1*06:06, allele DQB1*06:08, allele DQB1*06:09, allele DQB1*06:12, allele DQB1*06:13, allele DQB1*06:17, allele DQB1*06:18, allele DQB1*06:21, allele DQB1*06:22, allele DQB1*06:27, allele DQB1*06:34, allele DQB1*06:36, allele DQB1*06:38 and allele DQB1*06:39; dbSNP:rs1071637.">
    <original>D</original>
    <variation>V</variation>
    <location>
        <position position="89"/>
    </location>
</feature>
<feature type="sequence variant" id="VAR_062716" description="In allele DQB1*06:16; dbSNP:rs41562414.">
    <original>Y</original>
    <variation>N</variation>
    <location>
        <position position="92"/>
    </location>
</feature>
<feature type="sequence variant" id="VAR_062717" description="In allele DQB1*06:37; dbSNP:rs1130382.">
    <original>N</original>
    <variation>K</variation>
    <location>
        <position position="94"/>
    </location>
</feature>
<feature type="sequence variant" id="VAR_062718" description="In allele DQB1*03:15; dbSNP:rs41556215.">
    <original>S</original>
    <variation>R</variation>
    <location>
        <position position="95"/>
    </location>
</feature>
<feature type="sequence variant" id="VAR_062719" description="In allele DQB1*02:01, allele DQB1*02:02, allele DQB1*02:03, allele DQB1*02:04, allele DQB1*02:05, allele DQB1*03:06, allele DQB1*03:25, allele DQB1*04:01, allele DQB1*04:02, allele DQB1*04:03, allele DQB1*05:04, allele DQB1*06:01 and allele DQB1*06:35; dbSNP:rs9274390.">
    <original>E</original>
    <variation>D</variation>
    <location>
        <position position="98"/>
    </location>
</feature>
<feature type="sequence variant" id="VAR_062720" description="In allele DQB1*03:13; dbSNP:rs41563814.">
    <original>V</original>
    <variation>D</variation>
    <location>
        <position position="99"/>
    </location>
</feature>
<feature type="sequence variant" id="VAR_062721" description="In allele DQB1*02:01, allele DQB1*02:02, allele DQB1*02:03, allele DQB1*02:04, allele DQB1*02:05, allele DQB1*03:06, allele DQB1*03:25, allele DQB1*04:01, allele DQB1*04:02, allele DQB1*04:03, allele DQB1*05:04, allele DQB1*06:01 and allele DQB1*06:35; dbSNP:rs9274390.">
    <original>V</original>
    <variation>I</variation>
    <location>
        <position position="99"/>
    </location>
</feature>
<feature type="sequence variant" id="VAR_062722" description="In allele DQB1*03:06, allele DQB1*03:25, allele DQB1*04:01, allele DQB1*04:02, allele DQB1*04:03 and allele DQB1*05:04; requires 2 nucleotide substitutions.">
    <original>R</original>
    <variation>E</variation>
    <location>
        <position position="102"/>
    </location>
</feature>
<feature type="sequence variant" id="VAR_062723" description="In allele DQB1*03:08, allele DQB1*05:01, allele DQB1*05:02, allele DQB1*05:03, allele DQB1*05:05, allele DQB1*06:02, allele DQB1*06:03, allele DQB1*06:08, allele DQB1*06:10, allele DQB1*06:11, allele DQB1*06:12, allele DQB1*06:13, allele DQB1*06:14, allele DQB1*06:16, allele DQB1*06:17, allele DQB1*06:19, allele DQB1*06:20, allele DQB1*06:21, allele DQB1*06:23, allele DQB1*06:24, allele DQB1*06:28, allele DQB1*06:29, allele DQB1*06:30, allele DQB1*06:31 and allele DQB1*06:33; dbSNP:rs1130386." evidence="6">
    <original>R</original>
    <variation>G</variation>
    <location>
        <position position="102"/>
    </location>
</feature>
<feature type="sequence variant" id="VAR_062724" description="In allele DQB1*05:01, allele DQB1*05:02, allele DQB1*05:03, allele DQB1*05:05, allele DQB1*06:17, allele DQB1*06:24 and allele DQB1*06:30; dbSNP:rs1130390.">
    <original>T</original>
    <variation>A</variation>
    <location>
        <position position="103"/>
    </location>
</feature>
<feature type="sequence variant" id="VAR_062725" description="In allele DQB1*03:06, allele DQB1*03:25, allele DQB1*04:01, allele DQB1*04:02, allele DQB1*04:03 and allele DQB1*05:04; requires 2 nucleotide substitutions.">
    <original>T</original>
    <variation>D</variation>
    <location>
        <position position="103"/>
    </location>
</feature>
<feature type="sequence variant" id="VAR_062726" description="In allele DQB1*02:01, allele DQB1*02:02, allele DQB1*02:03, allele DQB1*02:04 and allele DQB1*02:05.">
    <original>T</original>
    <variation>K</variation>
    <location>
        <position position="103"/>
    </location>
</feature>
<feature type="sequence variant" id="VAR_062727" description="In allele DQB1*02:01, allele DQB1*02:02, allele DQB1*02:03, allele DQB1*02:04, allele DQB1*02:05 and allele DQB1*06:06; dbSNP:rs1130387.">
    <original>E</original>
    <variation>A</variation>
    <location>
        <position position="106"/>
    </location>
</feature>
<feature type="sequence variant" id="VAR_062728" description="In allele DQB1*03:06, allele DQB1*03:25, allele DQB1*04:01, allele DQB1*04:02, allele DQB1*04:03, allele DQB1*05:01, allele DQB1*05:02, allele DQB1*05:03, allele DQB1*05:04 and allele DQB1*05:05; requires 2 nucleotide substitutions.">
    <original>E</original>
    <variation>S</variation>
    <location>
        <position position="106"/>
    </location>
</feature>
<feature type="sequence variant" id="VAR_062729" description="In allele DQB1*02:01, allele DQB1*02:02, allele DQB1*02:03, allele DQB1*02:04, allele DQB1*02:05, allele DQB1*03:06, allele DQB1*03:25, allele DQB1*04:01, allele DQB1*04:02, allele DQB1*04:03, allele DQB1*05:01, allele DQB1*05:02, allele DQB1*05:03, allele DQB1*05:04, allele DQB1*05:05 and allele DQB1*06:06; dbSNP:rs9274384.">
    <original>L</original>
    <variation>V</variation>
    <location>
        <position position="107"/>
    </location>
</feature>
<feature type="sequence variant" id="VAR_062730" description="In allele DQB1*02:01, allele DQB1*02:02, allele DQB1*02:03, allele DQB1*02:04, allele DQB1*05:01, allele DQB1*05:02, allele DQB1*05:03, allele DQB1*05:04, allele DQB1*05:05 and allele DQB1*06:06; dbSNP:rs1130392.">
    <original>T</original>
    <variation>R</variation>
    <location>
        <position position="109"/>
    </location>
</feature>
<feature type="sequence variant" id="VAR_062731" description="In allele DQB1*05:01, allele DQB1*05:02, allele DQB1*05:03, allele DQB1*05:05, allele DQB1*06:01, allele DQB1*06:02, allele DQB1*06:03, allele DQB1*06:04, allele DQB1*06:05, allele DQB1*06:07, allele DQB1*06:08, allele DQB1*06:09, allele DQB1*06:10, allele DQB1*06:11, allele DQB1*06:12, allele DQB1*06:13, allele DQB1*06:14, allele DQB1*06:15, allele DQB1*06:16, allele DQB1*06:17, allele DQB1*06:18, allele DQB1*06:19, allele DQB1*06:20, allele DQB1*06:21, allele DQB1*06:22, allele DQB1*06:23, allele DQB1*06:24, allele DQB1*06:25, allele DQB1*06:27, allele DQB1*06:28, allele DQB1*06:29, allele DQB1*06:30, allele DQB1*06:31, allele DQB1*06:32, allele DQB1*06:33, allele DQB1*06:34, allele DQB1*06:35, allele DQB1*06:36, allele DQB1*06:37, allele DQB1*06:38, allele DQB1*06:39; dbSNP:rs1140316.">
    <original>Q</original>
    <variation>E</variation>
    <location>
        <position position="116"/>
    </location>
</feature>
<feature type="sequence variant" id="VAR_062732" description="In allele DQB1*05:01, allele DQB1*05:02, allele DQB1*05:03, allele DQB1*05:05, allele DQB1*06:01, allele DQB1*06:02, allele DQB1*06:03, allele DQB1*06:04, allele DQB1*06:05, allele DQB1*06:07, allele DQB1*06:08, allele DQB1*06:09, allele DQB1*06:10, allele DQB1*06:11, allele DQB1*06:12, allele DQB1*06:13, allele DQB1*06:14, allele DQB1*06:15, allele DQB1*06:16, allele DQB1*06:17, allele DQB1*06:18, allele DQB1*06:19, allele DQB1*06:20, allele DQB1*06:21, allele DQB1*06:22, allele DQB1*06:23, allele DQB1*06:24, allele DQB1*06:25, allele DQB1*06:27, allele DQB1*06:28, allele DQB1*06:29, allele DQB1*06:30, allele DQB1*06:31, allele DQB1*06:32, allele DQB1*06:33, allele DQB1*06:34, allele DQB1*06:35, allele DQB1*06:36, allele DQB1*06:37, allele DQB1*06:38 and allele DQB1*06:39; dbSNP:rs1140317.">
    <original>L</original>
    <variation>V</variation>
    <location>
        <position position="117"/>
    </location>
</feature>
<feature type="sequence variant" id="VAR_062733" description="In allele DQB1*05:01, allele DQB1*05:02, allele DQB1*05:03, allele DQB1*05:05, allele DQB1*06:01, allele DQB1*06:02, allele DQB1*06:03, allele DQB1*06:08, allele DQB1*06:10, allele DQB1*06:11, allele DQB1*06:13, allele DQB1*06:14, allele DQB1*06:16, allele DQB1*06:18, allele DQB1*06:19, allele DQB1*06:20, allele DQB1*06:23, allele DQB1*06:24, allele DQB1*06:27, allele DQB1*06:28, allele DQB1*06:29, allele DQB1*06:30, allele DQB1*06:31, allele DQB1*06:32, allele DQB1*06:33, allele DQB1*06:35 and allele DQB1*06:37; dbSNP:rs9274380.">
    <original>E</original>
    <variation>A</variation>
    <location>
        <position position="118"/>
    </location>
</feature>
<feature type="sequence variant" id="VAR_062734" description="In allele DQB1*06:04, allele DQB1*06:05, allele DQB1*06:07, allele DQB1*06:09, allele DQB1*06:12, allele DQB1*06:15, allele DQB1*06:17, allele DQB1*06:21, allele DQB1*06:22, allele DQB1*06:25, allele DQB1*06:34, allele DQB1*06:36, allele DQB1*06:38 and allele DQB1*06:39; dbSNP:rs9274380.">
    <original>E</original>
    <variation>G</variation>
    <location>
        <position position="118"/>
    </location>
</feature>
<feature type="sequence variant" id="VAR_062735" description="In allele DQB1*06:01, allele DQB1*06:02, allele DQB1*06:03, allele DQB1*06:08, allele DQB1*06:10, allele DQB1*06:11, allele DQB1*06:13, allele DQB1*06:14, allele DQB1*06:16, allele DQB1*06:18, allele DQB1*06:19, allele DQB1*06:20, allele DQB1*06:23, allele DQB1*06:24, allele DQB1*06:27, allele DQB1*06:28, allele DQB1*06:29, allele DQB1*06:30, allele DQB1*06:31, allele DQB1*06:32, allele DQB1*06:33, allele DQB1*06:35 and allele DQB1*06:37; dbSNP:rs9274379.">
    <original>L</original>
    <variation>F</variation>
    <location>
        <position position="119"/>
    </location>
</feature>
<feature type="sequence variant" id="VAR_062736" description="In allele DQB1*05:01, allele DQB1*05:02, allele DQB1*05:03, allele DQB1*05:05, allele DQB1*06:04, allele DQB1*06:05, allele DQB1*06:07, allele DQB1*06:09, allele DQB1*06:12, allele DQB1*06:15, allele DQB1*06:17, allele DQB1*06:21, allele DQB1*06:22, allele DQB1*06:25, allele DQB1*06:34, allele DQB1*06:36, allele DQB1*06:38 and allele DQB1*06:39; requires 2 nucleotide substitutions.">
    <original>L</original>
    <variation>Y</variation>
    <location>
        <position position="119"/>
    </location>
</feature>
<feature type="sequence variant" id="VAR_062737" description="In allele DQB1*05:01, allele DQB1*05:02, allele DQB1*05:03, allele DQB1*05:05, allele DQB1*06:01, allele DQB1*06:02, allele DQB1*06:03, allele DQB1*06:04, allele DQB1*06:05, allele DQB1*06:07, allele DQB1*06:08, allele DQB1*06:09, allele DQB1*06:10, allele DQB1*06:11, allele DQB1*06:12, allele DQB1*06:13, allele DQB1*06:14, allele DQB1*06:15, allele DQB1*06:16, allele DQB1*06:17, allele DQB1*06:18, allele DQB1*06:19, allele DQB1*06:21, allele DQB1*06:22, allele DQB1*06:23, allele DQB1*06:24, allele DQB1*06:25, allele DQB1*06:27, allele DQB1*06:28, allele DQB1*06:29, allele DQB1*06:30, allele DQB1*06:31, allele DQB1*06:32, allele DQB1*06:33, allele DQB1*06:34, allele DQB1*06:35, allele DQB1*06:36, allele DQB1*06:37, allele DQB1*06:38 and allele DQB1*06:39; requires 2 nucleotide substitutions.">
    <original>T</original>
    <variation>G</variation>
    <location>
        <position position="121"/>
    </location>
</feature>
<feature type="sequence variant" id="VAR_062738" description="In allele DQB1*05:01, allele DQB1*05:02, allele DQB1*05:03, allele DQB1*05:05, allele DQB1*06:01, allele DQB1*06:02, allele DQB1*06:03, allele DQB1*06:04, allele DQB1*06:05, allele DQB1*06:07, allele DQB1*06:08, allele DQB1*06:09, allele DQB1*06:10, allele DQB1*06:11, allele DQB1*06:12, allele DQB1*06:14, allele DQB1*06:15, allele DQB1*06:16, allele DQB1*06:17, allele DQB1*06:18, allele DQB1*06:19, allele DQB1*06:21, allele DQB1*06:22, allele DQB1*06:23, allele DQB1*06:24, allele DQB1*06:25, allele DQB1*06:27, allele DQB1*06:28, allele DQB1*06:29, allele DQB1*06:30, allele DQB1*06:31, allele DQB1*06:32, allele DQB1*06:33, allele DQB1*06:34, allele DQB1*06:35, allele DQB1*06:36, allele DQB1*06:37, allele DQB1*06:38 and allele DQB1*06:39; dbSNP:rs1140320.">
    <original>T</original>
    <variation>I</variation>
    <location>
        <position position="122"/>
    </location>
</feature>
<feature type="sequence variant" id="VAR_056571" description="In allele DQB1*05:01, allele DQB1*05:02 and allele DQB1*05:03; dbSNP:rs1049100.">
    <original>V</original>
    <variation>I</variation>
    <location>
        <position position="148"/>
    </location>
</feature>
<feature type="sequence variant" id="VAR_062739" description="In allele DQB1*06:01, allele DQB1*06:02, allele DQB1*06:03, allele DQB1*06:04, allele DQB1*06:09, allele DQB1*06:12, allele DQB1*06:34, allele DQB1*06:36, allele DQB1*06:38 and allele DQB1*06:39; dbSNP:rs1063322.">
    <original>A</original>
    <variation>G</variation>
    <location>
        <position position="157"/>
    </location>
</feature>
<feature type="sequence variant" id="VAR_062740" description="In allele DQB1*05:01, allele DQB1*05:02 and allele DQB1*05:03.">
    <original>A</original>
    <variation>S</variation>
    <location>
        <position position="157"/>
    </location>
</feature>
<feature type="sequence variant" id="VAR_062741" description="In allele DQB1*05:02; dbSNP:rs41542812.">
    <original>Q</original>
    <variation>H</variation>
    <location>
        <position position="158"/>
    </location>
</feature>
<feature type="sequence variant" id="VAR_062742" description="In allele DQB1*03:22, allele DQB1*06:04, allele DQB1*06:09, allele DQB1*06:12, allele DQB1*06:34, allele DQB1*06:36 and allele DQB1*06:38; dbSNP:rs41544112.">
    <original>R</original>
    <variation>Q</variation>
    <location>
        <position position="162"/>
    </location>
</feature>
<feature type="sequence variant" id="VAR_062744" description="In allele DQB1*06:38; dbSNP:rs9273989.">
    <original>R</original>
    <variation>Q</variation>
    <location>
        <position position="165"/>
    </location>
</feature>
<feature type="sequence variant" id="VAR_062743" description="In allele DQB1*03:21; dbSNP:rs63626961.">
    <original>R</original>
    <variation>W</variation>
    <location>
        <position position="165"/>
    </location>
</feature>
<feature type="sequence variant" id="VAR_062745" description="In allele DQB1*02:02; dbSNP:rs2647032.">
    <original>D</original>
    <variation>G</variation>
    <location>
        <position position="167"/>
    </location>
</feature>
<feature type="sequence variant" id="VAR_062746" description="In allele DQB1*02:04; dbSNP:rs9273981.">
    <original>Q</original>
    <variation>E</variation>
    <location>
        <position position="168"/>
    </location>
</feature>
<feature type="sequence variant" id="VAR_062747" description="In allele DQB1*02:01, allele DQB1*02:02, allele DQB1*02:04, allele DQB1*05:01, allele DQB1*05:02, allele DQB1*05:03, allele DQB1*06:01, allele DQB1*06:02, allele DQB1*06:03, allele DQB1*06:04, allele DQB1*06:09, allele DQB1*06:12, allele DQB1*06:34, allele DQB1*06:36, allele DQB1*06:38 and allele DQB1*06:39; dbSNP:rs1063323." evidence="9">
    <original>T</original>
    <variation>A</variation>
    <location>
        <position position="172"/>
    </location>
</feature>
<feature type="sequence variant" id="VAR_056572" description="In dbSNP:rs9273952.">
    <original>E</original>
    <variation>D</variation>
    <location>
        <position position="194"/>
    </location>
</feature>
<feature type="sequence variant" id="VAR_059522" description="In dbSNP:rs9273948.">
    <original>P</original>
    <variation>L</variation>
    <location>
        <position position="197"/>
    </location>
</feature>
<feature type="sequence variant" id="VAR_062748" description="In allele DQB1*02:01, allele DQB1*02:02, allele DQB1*02:04, allele DQB1*03:02, allele DQB1*03:03, allele DQB1*03:05, allele DQB1*03:23, allele DQB1*03:25, allele DQB1*04:01, allele DQB1*04:02, allele DQB1*05:01, allele DQB1*05:02, allele DQB1*05:03, allele DQB1*06:02, allele DQB1*06:03, allele DQB1*06:04, allele DQB1*06:09, allele DQB1*06:12, allele DQB1*06:34, allele DQB1*06:36, allele DQB1*06:38 and allele DQB1*06:39; dbSNP:rs701564." evidence="6">
    <original>H</original>
    <variation>R</variation>
    <location>
        <position position="199"/>
    </location>
</feature>
<feature type="sequence variant" id="VAR_062749" description="In allele DQB1*03:09.">
    <original>GD</original>
    <variation>A</variation>
    <location>
        <begin position="200"/>
        <end position="201"/>
    </location>
</feature>
<feature type="sequence variant" id="VAR_062750" description="In allele DQB1*03:24; dbSNP:rs80255621.">
    <original>V</original>
    <variation>I</variation>
    <location>
        <position position="202"/>
    </location>
</feature>
<feature type="sequence variant" id="VAR_062751" description="In allele DQB1*02:01, allele DQB1*02:02, allele DQB1*02:04, allele DQB1*05:01, allele DQB1*05:02, allele DQB1*05:03, allele DQB1*06:01, allele DQB1*06:02, allele DQB1*06:03, allele DQB1*06:04, allele DQB1*06:09, allele DQB1*06:12, allele DQB1*06:34, allele DQB1*06:36, allele DQB1*06:38 and allele DQB1*06:39; dbSNP:rs1130398.">
    <original>N</original>
    <variation>S</variation>
    <location>
        <position position="214"/>
    </location>
</feature>
<feature type="sequence variant" id="VAR_062752" description="In allele DQB1*03:02, allele DQB1*03:03, allele DQB1*03:05, allele DQB1*03:19, allele DQB1*03:25, allele DQB1*04:01 and allele DQB1*04:02; dbSNP:rs1130399.">
    <original>T</original>
    <variation>I</variation>
    <location>
        <position position="217"/>
    </location>
</feature>
<feature type="sequence variant" id="VAR_062753" description="In allele DQB1*06:36; dbSNP:rs281864132.">
    <original>V</original>
    <variation>A</variation>
    <location>
        <position position="218"/>
    </location>
</feature>
<feature type="sequence variant" id="VAR_062754" description="In allele DQB1*06:01; dbSNP:rs1130429.">
    <original>S</original>
    <variation>N</variation>
    <location>
        <position position="229"/>
    </location>
</feature>
<feature type="sequence variant" id="VAR_062755" description="In allele DQB1*05:01, allele DQB1*05:02, allele DQB1*05:03, allele DQB1*06:02, allele DQB1*06:03, allele DQB1*06:04, allele DQB1*06:09, allele DQB1*06:12 and allele DQB1*06:36; dbSNP:rs1049163.">
    <original>I</original>
    <variation>V</variation>
    <location>
        <position position="235"/>
    </location>
</feature>
<feature type="sequence variant" id="VAR_062756" description="In allele DQB1*05:01, allele DQB1*05:02, allele DQB1*05:03, allele DQB1*06:01, allele DQB1*06:02, allele DQB1*06:03, allele DQB1*06:04, allele DQB1*06:09, allele DQB1*06:12 and allele DQB1*06:36; dbSNP:rs1140342.">
    <original>H</original>
    <variation>R</variation>
    <location>
        <position position="252"/>
    </location>
</feature>
<feature type="sequence variant" id="VAR_062757" description="In allele DQB1*05:01, allele DQB1*05:02, allele DQB1*05:03, allele DQB1*06:01, allele DQB1*06:02, allele DQB1*06:03, allele DQB1*06:04, allele DQB1*06:09, allele DQB1*06:12 and allele DQB1*06:36; dbSNP:rs1140343.">
    <original>H</original>
    <variation>Q</variation>
    <location>
        <position position="253"/>
    </location>
</feature>
<feature type="sequence variant" id="VAR_061474" description="In allele DQB1*05:01, allele DQB1*05:02 and allele DQB1*05:03; dbSNP:rs1130432.">
    <original>Q</original>
    <variation>R</variation>
    <location>
        <position position="256"/>
    </location>
</feature>
<feature type="sequence conflict" description="In Ref. 71; AAD39697." evidence="8" ref="71">
    <original>C</original>
    <variation>S</variation>
    <location>
        <position position="111"/>
    </location>
</feature>
<feature type="sequence conflict" description="In Ref. 22; AAF28315." evidence="8" ref="22">
    <original>H</original>
    <variation>Q</variation>
    <location>
        <position position="113"/>
    </location>
</feature>
<feature type="sequence conflict" description="In Ref. 24; X76553/X76554." evidence="8" ref="24">
    <original>G</original>
    <variation>A</variation>
    <location>
        <position position="173"/>
    </location>
</feature>
<feature type="sequence conflict" description="In Ref. 8; AAA59770." evidence="8" ref="8">
    <original>N</original>
    <variation>T</variation>
    <location>
        <position position="214"/>
    </location>
</feature>
<feature type="strand" evidence="11">
    <location>
        <begin position="40"/>
        <end position="50"/>
    </location>
</feature>
<feature type="turn" evidence="11">
    <location>
        <begin position="51"/>
        <end position="54"/>
    </location>
</feature>
<feature type="strand" evidence="11">
    <location>
        <begin position="55"/>
        <end position="64"/>
    </location>
</feature>
<feature type="strand" evidence="11">
    <location>
        <begin position="67"/>
        <end position="73"/>
    </location>
</feature>
<feature type="turn" evidence="11">
    <location>
        <begin position="74"/>
        <end position="76"/>
    </location>
</feature>
<feature type="strand" evidence="11">
    <location>
        <begin position="78"/>
        <end position="83"/>
    </location>
</feature>
<feature type="helix" evidence="11">
    <location>
        <begin position="84"/>
        <end position="86"/>
    </location>
</feature>
<feature type="helix" evidence="11">
    <location>
        <begin position="87"/>
        <end position="94"/>
    </location>
</feature>
<feature type="helix" evidence="11">
    <location>
        <begin position="97"/>
        <end position="109"/>
    </location>
</feature>
<feature type="helix" evidence="11">
    <location>
        <begin position="111"/>
        <end position="117"/>
    </location>
</feature>
<feature type="helix" evidence="11">
    <location>
        <begin position="119"/>
        <end position="122"/>
    </location>
</feature>
<feature type="strand" evidence="11">
    <location>
        <begin position="130"/>
        <end position="135"/>
    </location>
</feature>
<feature type="strand" evidence="10">
    <location>
        <begin position="141"/>
        <end position="144"/>
    </location>
</feature>
<feature type="strand" evidence="11">
    <location>
        <begin position="146"/>
        <end position="157"/>
    </location>
</feature>
<feature type="strand" evidence="11">
    <location>
        <begin position="160"/>
        <end position="165"/>
    </location>
</feature>
<feature type="strand" evidence="11">
    <location>
        <begin position="168"/>
        <end position="170"/>
    </location>
</feature>
<feature type="strand" evidence="11">
    <location>
        <begin position="174"/>
        <end position="176"/>
    </location>
</feature>
<feature type="strand" evidence="11">
    <location>
        <begin position="183"/>
        <end position="185"/>
    </location>
</feature>
<feature type="strand" evidence="11">
    <location>
        <begin position="187"/>
        <end position="194"/>
    </location>
</feature>
<feature type="strand" evidence="11">
    <location>
        <begin position="203"/>
        <end position="208"/>
    </location>
</feature>
<feature type="strand" evidence="11">
    <location>
        <begin position="216"/>
        <end position="220"/>
    </location>
</feature>
<feature type="helix" evidence="12">
    <location>
        <begin position="229"/>
        <end position="256"/>
    </location>
</feature>
<accession>P01920</accession>
<accession>A1KR27</accession>
<accession>A2RPH3</accession>
<accession>A4Q9R4</accession>
<accession>A4USG2</accession>
<accession>A4USG5</accession>
<accession>A6N8I7</accession>
<accession>A9YQA0</accession>
<accession>B0S7Y7</accession>
<accession>B1A0K6</accession>
<accession>B1GXI3</accession>
<accession>B3VLT3</accession>
<accession>B5BLN7</accession>
<accession>B7VU69</accession>
<accession>C0MQ34</accession>
<accession>C0MQ35</accession>
<accession>C8ZL52</accession>
<accession>C8ZLJ8</accession>
<accession>C8ZLJ9</accession>
<accession>C9DRQ3</accession>
<accession>O19708</accession>
<accession>O19713</accession>
<accession>O19724</accession>
<accession>O62861</accession>
<accession>O78046</accession>
<accession>O78221</accession>
<accession>O78223</accession>
<accession>O98034</accession>
<accession>O98201</accession>
<accession>P01917</accession>
<accession>P01918</accession>
<accession>P01919</accession>
<accession>P03992</accession>
<accession>P05537</accession>
<accession>P79482</accession>
<accession>P79526</accession>
<accession>P79544</accession>
<accession>P79551</accession>
<accession>Q08GC8</accession>
<accession>Q09035</accession>
<accession>Q0E4V9</accession>
<accession>Q1M312</accession>
<accession>Q29731</accession>
<accession>Q29877</accession>
<accession>Q29884</accession>
<accession>Q29915</accession>
<accession>Q29966</accession>
<accession>Q2P9N3</accession>
<accession>Q2QK85</accession>
<accession>Q30061</accession>
<accession>Q30075</accession>
<accession>Q30076</accession>
<accession>Q30080</accession>
<accession>Q30081</accession>
<accession>Q30082</accession>
<accession>Q30083</accession>
<accession>Q30084</accession>
<accession>Q30089</accession>
<accession>Q30095</accession>
<accession>Q31633</accession>
<accession>Q38I47</accession>
<accession>Q45UE3</accession>
<accession>Q4QZB5</accession>
<accession>Q53I44</accession>
<accession>Q564J6</accession>
<accession>Q5G841</accession>
<accession>Q5ISH1</accession>
<accession>Q5ISH3</accession>
<accession>Q5W1E1</accession>
<accession>Q5Y7G8</accession>
<accession>Q643R4</accession>
<accession>Q6B9X1</accession>
<accession>Q70VH8</accession>
<accession>Q7YP69</accession>
<accession>Q8HWH0</accession>
<accession>Q8MH58</accession>
<accession>Q8SNB4</accession>
<accession>Q8SND1</accession>
<accession>Q8SP70</accession>
<accession>Q8WMA3</accession>
<accession>Q9BD17</accession>
<accession>Q9MYH2</accession>
<accession>Q9TPA9</accession>
<accession>Q9XRY6</accession>
<accession>Q9XRY7</accession>
<accession>Q9XRZ2</accession>
<comment type="function">
    <text>Binds peptides derived from antigens that access the endocytic route of antigen presenting cells (APC) and presents them on the cell surface for recognition by the CD4 T-cells. The peptide binding cleft accommodates peptides of 10-30 residues. The peptides presented by MHC class II molecules are generated mostly by degradation of proteins that access the endocytic route, where they are processed by lysosomal proteases and other hydrolases. Exogenous antigens that have been endocytosed by the APC are thus readily available for presentation via MHC II molecules, and for this reason this antigen presentation pathway is usually referred to as exogenous. As membrane proteins on their way to degradation in lysosomes as part of their normal turn-over are also contained in the endosomal/lysosomal compartments, exogenous antigens must compete with those derived from endogenous components. Autophagy is also a source of endogenous peptides, autophagosomes constitutively fuse with MHC class II loading compartments. In addition to APCs, other cells of the gastrointestinal tract, such as epithelial cells, express MHC class II molecules and CD74 and act as APCs, which is an unusual trait of the GI tract. To produce a MHC class II molecule that presents an antigen, three MHC class II molecules (heterodimers of an alpha and a beta chain) associate with a CD74 trimer in the ER to form a heterononamer. Soon after the entry of this complex into the endosomal/lysosomal system where antigen processing occurs, CD74 undergoes a sequential degradation by various proteases, including CTSS and CTSL, leaving a small fragment termed CLIP (class-II-associated invariant chain peptide). The removal of CLIP is facilitated by HLA-DM via direct binding to the alpha-beta-CLIP complex so that CLIP is released. HLA-DM stabilizes MHC class II molecules until primary high affinity antigenic peptides are bound. The MHC II molecule bound to a peptide is then transported to the cell membrane surface. In B-cells, the interaction between HLA-DM and MHC class II molecules is regulated by HLA-DO. Primary dendritic cells (DCs) also to express HLA-DO. Lysosomal microenvironment has been implicated in the regulation of antigen loading into MHC II molecules, increased acidification produces increased proteolysis and efficient peptide loading.</text>
</comment>
<comment type="subunit">
    <text evidence="2 3 4 5">Heterodimer of an alpha and a beta subunit; also referred as MHC class II molecule. In the endoplasmic reticulum (ER) it forms a heterononamer; 3 MHC class II molecules bind to a CD74 homotrimer (also known as invariant chain or HLA class II histocompatibility antigen gamma chain). In the endosomal/lysosomal system; CD74 undergoes sequential degradation by various proteases; leaving a small fragment termed CLIP on each MHC class II molecule. MHC class II molecule interacts with HLA_DM, and HLA_DO in B-cells, in order to release CLIP and facilitate the binding of antigenic peptides.</text>
</comment>
<comment type="interaction">
    <interactant intactId="EBI-1038012">
        <id>P01920</id>
    </interactant>
    <interactant intactId="EBI-713389">
        <id>P01909</id>
        <label>HLA-DQA1</label>
    </interactant>
    <organismsDiffer>false</organismsDiffer>
    <experiments>9</experiments>
</comment>
<comment type="subcellular location">
    <subcellularLocation>
        <location>Cell membrane</location>
        <topology>Single-pass type I membrane protein</topology>
    </subcellularLocation>
    <subcellularLocation>
        <location>Endoplasmic reticulum membrane</location>
        <topology>Single-pass type I membrane protein</topology>
    </subcellularLocation>
    <subcellularLocation>
        <location>Golgi apparatus</location>
        <location>trans-Golgi network membrane</location>
        <topology>Single-pass type I membrane protein</topology>
    </subcellularLocation>
    <subcellularLocation>
        <location>Endosome membrane</location>
        <topology>Single-pass type I membrane protein</topology>
    </subcellularLocation>
    <subcellularLocation>
        <location>Lysosome membrane</location>
        <topology>Single-pass type I membrane protein</topology>
    </subcellularLocation>
    <text>The MHC class II complex transits through a number of intracellular compartments in the endocytic pathway until it reaches the cell membrane for antigen presentation.</text>
</comment>
<comment type="polymorphism">
    <text>The following alleles of HLA-DQB1 are known: DQB1*02:01, DQB1*02:02, DQB1*02:03, DQB1*02:04, DQB1*02:05, DQB1*03:01, DQB1*03:02, DQB1*03:03, DQB1*03:04, DQB1*03:05, DQB1*03:06, DQB1*03:07, DQB1*03:08, DQB1*03:09, DQB1*03:10, DQB1*03:11, DQB1*03:12, DQB1*03:13, DQB1*03:14, DQB1*03:15, DQB1*03:16, DQB1*03:17, DQB1*03:18, DQB1*03:19, DQB1*03:20, DQB1*03:21, DQB1*03:22, DQB1*03:23, DQB1*03:24, DQB1*03:25, DQB1*03:26, DQB1*04:01, DQB1*04:02, DQB1*04:03, DQB1*05:01, DQB1*05:02, DQB1*05:03, DQB1*05:04, DQB1*05:05, DQB1*06:01, DQB1*06:02, DQB1*06:03, DQB1*06:04, DQB1*06:05, DQB1*06:06, DQB1*06:07, DQB1*06:08, DQB1*06:09, DQB1*06:10, DQB1*06:11, DQB1*06:12, DQB1*06:13, DQB1*06:14, DQB1*06:15, DQB1*06:16, DQB1*06:17, DQB1*06:18, DQB1*06:19, DQB1*06:20, DQB1*06:21, DQB1*06:22, DQB1*06:23, DQB1*06:24, DQB1*06:25, DQB1*06:27, DQB1*06:28, DQB1*06:29, DQB1*06:30, DQB1*06:31, DQB1*06:32, DQB1*06:33, DQB1*06:34, DQB1*06:35, DQB1*06:36, DQB1*06:37, DQB1*06:38, and DQB1*06:39. The sequence shown is that of DQB1*03:01.</text>
</comment>
<comment type="polymorphism">
    <text>DQ2 (heterodimer of DQA1*05:01/DQB1*02:01) is associated with more than 90% of celiac disease patients. A minority displays DQ8 (heterodimer of DQA1*03/DQB1*03:02).</text>
</comment>
<comment type="polymorphism">
    <text>DQ0602 (heterodimer of DQA1*01:02/DQB1*06:02) confers dominant protection against type 1 diabetes (T1D) and strong susceptibility to narcolepsy. DQB1*06:02 has been found to be present in most of the narcolepsy patients. As well 98% of the patients with an HCRT deficiency are positive for DQB1*06:02.</text>
</comment>
<comment type="similarity">
    <text evidence="8">Belongs to the MHC class II family.</text>
</comment>
<comment type="sequence caution" evidence="8">
    <conflict type="erroneous gene model prediction">
        <sequence resource="EMBL-CDS" id="AAC64403"/>
    </conflict>
</comment>
<comment type="sequence caution" evidence="8">
    <conflict type="erroneous gene model prediction">
        <sequence resource="EMBL-CDS" id="CAJ57391"/>
    </conflict>
</comment>
<name>DQB1_HUMAN</name>
<sequence>MSWKKALRIPGGLRAATVTLMLAMLSTPVAEGRDSPEDFVYQFKAMCYFTNGTERVRYVTRYIYNREEYARFDSDVEVYRAVTPLGPPDAEYWNSQKEVLERTRAELDTVCRHNYQLELRTTLQRRVEPTVTISPSRTEALNHHNLLVCSVTDFYPAQIKVRWFRNDQEETTGVVSTPLIRNGDWTFQILVMLEMTPQHGDVYTCHVEHPSLQNPITVEWRAQSESAQSKMLSGIGGFVLGLIFLGLGLIIHHRSQKGLLH</sequence>